<evidence type="ECO:0000255" key="1"/>
<evidence type="ECO:0000255" key="2">
    <source>
        <dbReference type="PROSITE-ProRule" id="PRU00204"/>
    </source>
</evidence>
<evidence type="ECO:0000269" key="3">
    <source>
    </source>
</evidence>
<evidence type="ECO:0000269" key="4">
    <source>
    </source>
</evidence>
<evidence type="ECO:0000269" key="5">
    <source>
    </source>
</evidence>
<evidence type="ECO:0000269" key="6">
    <source>
    </source>
</evidence>
<evidence type="ECO:0000269" key="7">
    <source>
    </source>
</evidence>
<evidence type="ECO:0000269" key="8">
    <source>
    </source>
</evidence>
<evidence type="ECO:0000269" key="9">
    <source>
    </source>
</evidence>
<evidence type="ECO:0000269" key="10">
    <source>
    </source>
</evidence>
<evidence type="ECO:0000269" key="11">
    <source>
    </source>
</evidence>
<evidence type="ECO:0000269" key="12">
    <source>
    </source>
</evidence>
<evidence type="ECO:0000269" key="13">
    <source>
    </source>
</evidence>
<evidence type="ECO:0000269" key="14">
    <source>
    </source>
</evidence>
<evidence type="ECO:0000269" key="15">
    <source>
    </source>
</evidence>
<evidence type="ECO:0000269" key="16">
    <source>
    </source>
</evidence>
<evidence type="ECO:0000269" key="17">
    <source>
    </source>
</evidence>
<evidence type="ECO:0000269" key="18">
    <source>
    </source>
</evidence>
<evidence type="ECO:0000269" key="19">
    <source>
    </source>
</evidence>
<evidence type="ECO:0000269" key="20">
    <source>
    </source>
</evidence>
<evidence type="ECO:0000269" key="21">
    <source>
    </source>
</evidence>
<evidence type="ECO:0000269" key="22">
    <source>
    </source>
</evidence>
<evidence type="ECO:0000269" key="23">
    <source>
    </source>
</evidence>
<evidence type="ECO:0000269" key="24">
    <source>
    </source>
</evidence>
<evidence type="ECO:0000269" key="25">
    <source>
    </source>
</evidence>
<evidence type="ECO:0000269" key="26">
    <source>
    </source>
</evidence>
<evidence type="ECO:0000269" key="27">
    <source ref="4"/>
</evidence>
<evidence type="ECO:0000303" key="28">
    <source>
    </source>
</evidence>
<evidence type="ECO:0000305" key="29"/>
<evidence type="ECO:0000312" key="30">
    <source>
        <dbReference type="HGNC" id="HGNC:11849"/>
    </source>
</evidence>
<evidence type="ECO:0007744" key="31">
    <source>
        <dbReference type="PDB" id="7C76"/>
    </source>
</evidence>
<evidence type="ECO:0007829" key="32">
    <source>
        <dbReference type="PDB" id="1ZIW"/>
    </source>
</evidence>
<evidence type="ECO:0007829" key="33">
    <source>
        <dbReference type="PDB" id="2A0Z"/>
    </source>
</evidence>
<evidence type="ECO:0007829" key="34">
    <source>
        <dbReference type="PDB" id="5GS0"/>
    </source>
</evidence>
<evidence type="ECO:0007829" key="35">
    <source>
        <dbReference type="PDB" id="7C76"/>
    </source>
</evidence>
<evidence type="ECO:0007829" key="36">
    <source>
        <dbReference type="PDB" id="7WV3"/>
    </source>
</evidence>
<evidence type="ECO:0007829" key="37">
    <source>
        <dbReference type="PDB" id="7WV5"/>
    </source>
</evidence>
<evidence type="ECO:0007829" key="38">
    <source>
        <dbReference type="PDB" id="8AR1"/>
    </source>
</evidence>
<dbReference type="EMBL" id="U88879">
    <property type="protein sequence ID" value="AAC34134.1"/>
    <property type="molecule type" value="mRNA"/>
</dbReference>
<dbReference type="EMBL" id="DQ445682">
    <property type="protein sequence ID" value="ABE01399.1"/>
    <property type="molecule type" value="mRNA"/>
</dbReference>
<dbReference type="EMBL" id="AB445631">
    <property type="protein sequence ID" value="BAG55028.1"/>
    <property type="molecule type" value="mRNA"/>
</dbReference>
<dbReference type="EMBL" id="DQ360814">
    <property type="protein sequence ID" value="ABC86908.1"/>
    <property type="molecule type" value="Genomic_DNA"/>
</dbReference>
<dbReference type="EMBL" id="DQ360815">
    <property type="protein sequence ID" value="ABC86909.1"/>
    <property type="molecule type" value="Genomic_DNA"/>
</dbReference>
<dbReference type="EMBL" id="DQ360816">
    <property type="protein sequence ID" value="ABC86910.1"/>
    <property type="molecule type" value="Genomic_DNA"/>
</dbReference>
<dbReference type="EMBL" id="AK302143">
    <property type="protein sequence ID" value="BAH13636.1"/>
    <property type="molecule type" value="mRNA"/>
</dbReference>
<dbReference type="EMBL" id="AK314208">
    <property type="protein sequence ID" value="BAG36884.1"/>
    <property type="molecule type" value="mRNA"/>
</dbReference>
<dbReference type="EMBL" id="AC104070">
    <property type="status" value="NOT_ANNOTATED_CDS"/>
    <property type="molecule type" value="Genomic_DNA"/>
</dbReference>
<dbReference type="EMBL" id="CH471056">
    <property type="protein sequence ID" value="EAX04628.1"/>
    <property type="molecule type" value="Genomic_DNA"/>
</dbReference>
<dbReference type="EMBL" id="BC094737">
    <property type="protein sequence ID" value="AAH94737.1"/>
    <property type="molecule type" value="mRNA"/>
</dbReference>
<dbReference type="EMBL" id="BC096333">
    <property type="protein sequence ID" value="AAH96333.1"/>
    <property type="molecule type" value="mRNA"/>
</dbReference>
<dbReference type="EMBL" id="BC096334">
    <property type="protein sequence ID" value="AAH96334.1"/>
    <property type="molecule type" value="mRNA"/>
</dbReference>
<dbReference type="EMBL" id="BC096335">
    <property type="protein sequence ID" value="AAH96335.1"/>
    <property type="molecule type" value="mRNA"/>
</dbReference>
<dbReference type="CCDS" id="CCDS3846.1">
    <molecule id="O15455-1"/>
</dbReference>
<dbReference type="RefSeq" id="NP_003256.1">
    <molecule id="O15455-1"/>
    <property type="nucleotide sequence ID" value="NM_003265.3"/>
</dbReference>
<dbReference type="RefSeq" id="XP_016864066.1">
    <property type="nucleotide sequence ID" value="XM_017008577.1"/>
</dbReference>
<dbReference type="PDB" id="1ZIW">
    <property type="method" value="X-ray"/>
    <property type="resolution" value="2.10 A"/>
    <property type="chains" value="A=27-700"/>
</dbReference>
<dbReference type="PDB" id="2A0Z">
    <property type="method" value="X-ray"/>
    <property type="resolution" value="2.40 A"/>
    <property type="chains" value="A=22-703"/>
</dbReference>
<dbReference type="PDB" id="2MK9">
    <property type="method" value="NMR"/>
    <property type="chains" value="A/B=698-730"/>
</dbReference>
<dbReference type="PDB" id="2MKA">
    <property type="method" value="NMR"/>
    <property type="chains" value="A/B/C=698-730"/>
</dbReference>
<dbReference type="PDB" id="3ULU">
    <property type="method" value="X-ray"/>
    <property type="resolution" value="3.52 A"/>
    <property type="chains" value="A=22-702"/>
</dbReference>
<dbReference type="PDB" id="3ULV">
    <property type="method" value="X-ray"/>
    <property type="resolution" value="3.52 A"/>
    <property type="chains" value="A=22-702"/>
</dbReference>
<dbReference type="PDB" id="5GS0">
    <property type="method" value="X-ray"/>
    <property type="resolution" value="3.27 A"/>
    <property type="chains" value="A/B=27-697"/>
</dbReference>
<dbReference type="PDB" id="7C76">
    <property type="method" value="EM"/>
    <property type="resolution" value="3.40 A"/>
    <property type="chains" value="A=1-904"/>
</dbReference>
<dbReference type="PDB" id="7WV3">
    <property type="method" value="EM"/>
    <property type="resolution" value="2.26 A"/>
    <property type="chains" value="A/B/C/D=24-904"/>
</dbReference>
<dbReference type="PDB" id="7WV4">
    <property type="method" value="EM"/>
    <property type="resolution" value="3.35 A"/>
    <property type="chains" value="A/B/C/D=27-697"/>
</dbReference>
<dbReference type="PDB" id="7WV5">
    <property type="method" value="EM"/>
    <property type="resolution" value="3.10 A"/>
    <property type="chains" value="A/B=27-697"/>
</dbReference>
<dbReference type="PDB" id="7WVE">
    <property type="method" value="EM"/>
    <property type="resolution" value="3.11 A"/>
    <property type="chains" value="A/B=27-697"/>
</dbReference>
<dbReference type="PDB" id="7WVF">
    <property type="method" value="EM"/>
    <property type="resolution" value="3.91 A"/>
    <property type="chains" value="A/B=27-697"/>
</dbReference>
<dbReference type="PDB" id="7WVJ">
    <property type="method" value="EM"/>
    <property type="resolution" value="3.26 A"/>
    <property type="chains" value="A/B=27-697"/>
</dbReference>
<dbReference type="PDB" id="8AR1">
    <property type="method" value="NMR"/>
    <property type="chains" value="A=698-746"/>
</dbReference>
<dbReference type="PDB" id="8YHT">
    <property type="method" value="EM"/>
    <property type="resolution" value="2.88 A"/>
    <property type="chains" value="A=27-700"/>
</dbReference>
<dbReference type="PDB" id="8YHU">
    <property type="method" value="EM"/>
    <property type="resolution" value="2.88 A"/>
    <property type="chains" value="A=27-700"/>
</dbReference>
<dbReference type="PDB" id="9LSH">
    <property type="method" value="EM"/>
    <property type="resolution" value="3.80 A"/>
    <property type="chains" value="C=1-904"/>
</dbReference>
<dbReference type="PDB" id="9LSI">
    <property type="method" value="EM"/>
    <property type="resolution" value="3.30 A"/>
    <property type="chains" value="E=1-904"/>
</dbReference>
<dbReference type="PDB" id="9LSJ">
    <property type="method" value="EM"/>
    <property type="resolution" value="3.10 A"/>
    <property type="chains" value="C=1-904"/>
</dbReference>
<dbReference type="PDBsum" id="1ZIW"/>
<dbReference type="PDBsum" id="2A0Z"/>
<dbReference type="PDBsum" id="2MK9"/>
<dbReference type="PDBsum" id="2MKA"/>
<dbReference type="PDBsum" id="3ULU"/>
<dbReference type="PDBsum" id="3ULV"/>
<dbReference type="PDBsum" id="5GS0"/>
<dbReference type="PDBsum" id="7C76"/>
<dbReference type="PDBsum" id="7WV3"/>
<dbReference type="PDBsum" id="7WV4"/>
<dbReference type="PDBsum" id="7WV5"/>
<dbReference type="PDBsum" id="7WVE"/>
<dbReference type="PDBsum" id="7WVF"/>
<dbReference type="PDBsum" id="7WVJ"/>
<dbReference type="PDBsum" id="8AR1"/>
<dbReference type="PDBsum" id="8YHT"/>
<dbReference type="PDBsum" id="8YHU"/>
<dbReference type="PDBsum" id="9LSH"/>
<dbReference type="PDBsum" id="9LSI"/>
<dbReference type="PDBsum" id="9LSJ"/>
<dbReference type="BMRB" id="O15455"/>
<dbReference type="EMDB" id="EMD-30293"/>
<dbReference type="EMDB" id="EMD-32844"/>
<dbReference type="EMDB" id="EMD-32845"/>
<dbReference type="EMDB" id="EMD-32846"/>
<dbReference type="EMDB" id="EMD-32851"/>
<dbReference type="EMDB" id="EMD-32852"/>
<dbReference type="EMDB" id="EMD-32853"/>
<dbReference type="EMDB" id="EMD-39300"/>
<dbReference type="EMDB" id="EMD-39301"/>
<dbReference type="EMDB" id="EMD-63355"/>
<dbReference type="EMDB" id="EMD-63356"/>
<dbReference type="EMDB" id="EMD-63357"/>
<dbReference type="SMR" id="O15455"/>
<dbReference type="BioGRID" id="112953">
    <property type="interactions" value="51"/>
</dbReference>
<dbReference type="CORUM" id="O15455"/>
<dbReference type="DIP" id="DIP-29660N"/>
<dbReference type="FunCoup" id="O15455">
    <property type="interactions" value="200"/>
</dbReference>
<dbReference type="IntAct" id="O15455">
    <property type="interactions" value="22"/>
</dbReference>
<dbReference type="MINT" id="O15455"/>
<dbReference type="STRING" id="9606.ENSP00000296795"/>
<dbReference type="BindingDB" id="O15455"/>
<dbReference type="ChEMBL" id="CHEMBL1075113"/>
<dbReference type="TCDB" id="8.A.43.1.35">
    <property type="family name" value="the neat-domain containing methaemoglobin heme sequestration (n-mhs) family"/>
</dbReference>
<dbReference type="GlyCosmos" id="O15455">
    <property type="glycosylation" value="15 sites, No reported glycans"/>
</dbReference>
<dbReference type="GlyGen" id="O15455">
    <property type="glycosylation" value="17 sites, 33 N-linked glycans (10 sites), 1 O-linked glycan (1 site)"/>
</dbReference>
<dbReference type="iPTMnet" id="O15455"/>
<dbReference type="PhosphoSitePlus" id="O15455"/>
<dbReference type="BioMuta" id="TLR3"/>
<dbReference type="jPOST" id="O15455"/>
<dbReference type="MassIVE" id="O15455"/>
<dbReference type="PaxDb" id="9606-ENSP00000296795"/>
<dbReference type="PeptideAtlas" id="O15455"/>
<dbReference type="ProteomicsDB" id="20320"/>
<dbReference type="ProteomicsDB" id="48678">
    <molecule id="O15455-1"/>
</dbReference>
<dbReference type="Pumba" id="O15455"/>
<dbReference type="ABCD" id="O15455">
    <property type="antibodies" value="13 sequenced antibodies"/>
</dbReference>
<dbReference type="Antibodypedia" id="17502">
    <property type="antibodies" value="1169 antibodies from 47 providers"/>
</dbReference>
<dbReference type="DNASU" id="7098"/>
<dbReference type="Ensembl" id="ENST00000296795.8">
    <molecule id="O15455-1"/>
    <property type="protein sequence ID" value="ENSP00000296795.3"/>
    <property type="gene ID" value="ENSG00000164342.14"/>
</dbReference>
<dbReference type="Ensembl" id="ENST00000504367.1">
    <molecule id="O15455-2"/>
    <property type="protein sequence ID" value="ENSP00000423684.1"/>
    <property type="gene ID" value="ENSG00000164342.14"/>
</dbReference>
<dbReference type="Ensembl" id="ENST00000508051.2">
    <molecule id="O15455-2"/>
    <property type="protein sequence ID" value="ENSP00000513677.1"/>
    <property type="gene ID" value="ENSG00000164342.14"/>
</dbReference>
<dbReference type="Ensembl" id="ENST00000512264.1">
    <molecule id="O15455-2"/>
    <property type="protein sequence ID" value="ENSP00000513668.1"/>
    <property type="gene ID" value="ENSG00000164342.14"/>
</dbReference>
<dbReference type="Ensembl" id="ENST00000698354.1">
    <molecule id="O15455-2"/>
    <property type="protein sequence ID" value="ENSP00000513676.1"/>
    <property type="gene ID" value="ENSG00000164342.14"/>
</dbReference>
<dbReference type="GeneID" id="7098"/>
<dbReference type="KEGG" id="hsa:7098"/>
<dbReference type="MANE-Select" id="ENST00000296795.8">
    <property type="protein sequence ID" value="ENSP00000296795.3"/>
    <property type="RefSeq nucleotide sequence ID" value="NM_003265.3"/>
    <property type="RefSeq protein sequence ID" value="NP_003256.1"/>
</dbReference>
<dbReference type="UCSC" id="uc003iyq.4">
    <molecule id="O15455-1"/>
    <property type="organism name" value="human"/>
</dbReference>
<dbReference type="AGR" id="HGNC:11849"/>
<dbReference type="CTD" id="7098"/>
<dbReference type="DisGeNET" id="7098"/>
<dbReference type="GeneCards" id="TLR3"/>
<dbReference type="HGNC" id="HGNC:11849">
    <property type="gene designation" value="TLR3"/>
</dbReference>
<dbReference type="HPA" id="ENSG00000164342">
    <property type="expression patterns" value="Low tissue specificity"/>
</dbReference>
<dbReference type="MalaCards" id="TLR3"/>
<dbReference type="MIM" id="603029">
    <property type="type" value="gene"/>
</dbReference>
<dbReference type="MIM" id="613002">
    <property type="type" value="phenotype"/>
</dbReference>
<dbReference type="neXtProt" id="NX_O15455"/>
<dbReference type="OpenTargets" id="ENSG00000164342"/>
<dbReference type="Orphanet" id="1930">
    <property type="disease" value="Herpes simplex virus encephalitis"/>
</dbReference>
<dbReference type="PharmGKB" id="PA36551"/>
<dbReference type="VEuPathDB" id="HostDB:ENSG00000164342"/>
<dbReference type="eggNOG" id="KOG4641">
    <property type="taxonomic scope" value="Eukaryota"/>
</dbReference>
<dbReference type="GeneTree" id="ENSGT00940000159678"/>
<dbReference type="HOGENOM" id="CLU_006000_4_1_1"/>
<dbReference type="InParanoid" id="O15455"/>
<dbReference type="OMA" id="PYIYFWG"/>
<dbReference type="OrthoDB" id="676979at2759"/>
<dbReference type="PAN-GO" id="O15455">
    <property type="GO annotations" value="4 GO annotations based on evolutionary models"/>
</dbReference>
<dbReference type="PhylomeDB" id="O15455"/>
<dbReference type="TreeFam" id="TF325595"/>
<dbReference type="PathwayCommons" id="O15455"/>
<dbReference type="Reactome" id="R-HSA-1679131">
    <property type="pathway name" value="Trafficking and processing of endosomal TLR"/>
</dbReference>
<dbReference type="Reactome" id="R-HSA-168164">
    <property type="pathway name" value="Toll Like Receptor 3 (TLR3) Cascade"/>
</dbReference>
<dbReference type="Reactome" id="R-HSA-168927">
    <property type="pathway name" value="TICAM1, RIP1-mediated IKK complex recruitment"/>
</dbReference>
<dbReference type="Reactome" id="R-HSA-1810476">
    <property type="pathway name" value="RIP-mediated NFkB activation via ZBP1"/>
</dbReference>
<dbReference type="Reactome" id="R-HSA-5602410">
    <property type="pathway name" value="TLR3 deficiency - HSE"/>
</dbReference>
<dbReference type="Reactome" id="R-HSA-5602415">
    <property type="pathway name" value="UNC93B1 deficiency - HSE"/>
</dbReference>
<dbReference type="Reactome" id="R-HSA-5602566">
    <property type="pathway name" value="TICAM1 deficiency - HSE"/>
</dbReference>
<dbReference type="Reactome" id="R-HSA-5602571">
    <property type="pathway name" value="TRAF3 deficiency - HSE"/>
</dbReference>
<dbReference type="Reactome" id="R-HSA-9013957">
    <property type="pathway name" value="TLR3-mediated TICAM1-dependent programmed cell death"/>
</dbReference>
<dbReference type="Reactome" id="R-HSA-9013973">
    <property type="pathway name" value="TICAM1-dependent activation of IRF3/IRF7"/>
</dbReference>
<dbReference type="Reactome" id="R-HSA-9014325">
    <property type="pathway name" value="TICAM1,TRAF6-dependent induction of TAK1 complex"/>
</dbReference>
<dbReference type="Reactome" id="R-HSA-9828211">
    <property type="pathway name" value="Regulation of TBK1, IKKEpsilon-mediated activation of IRF3, IRF7 upon TLR3 ligation"/>
</dbReference>
<dbReference type="Reactome" id="R-HSA-9833110">
    <property type="pathway name" value="RSV-host interactions"/>
</dbReference>
<dbReference type="SignaLink" id="O15455"/>
<dbReference type="SIGNOR" id="O15455"/>
<dbReference type="BioGRID-ORCS" id="7098">
    <property type="hits" value="12 hits in 1155 CRISPR screens"/>
</dbReference>
<dbReference type="ChiTaRS" id="TLR3">
    <property type="organism name" value="human"/>
</dbReference>
<dbReference type="EvolutionaryTrace" id="O15455"/>
<dbReference type="GeneWiki" id="TLR_3"/>
<dbReference type="GenomeRNAi" id="7098"/>
<dbReference type="Pharos" id="O15455">
    <property type="development level" value="Tbio"/>
</dbReference>
<dbReference type="PRO" id="PR:O15455"/>
<dbReference type="Proteomes" id="UP000005640">
    <property type="component" value="Chromosome 4"/>
</dbReference>
<dbReference type="RNAct" id="O15455">
    <property type="molecule type" value="protein"/>
</dbReference>
<dbReference type="Bgee" id="ENSG00000164342">
    <property type="expression patterns" value="Expressed in jejunal mucosa and 169 other cell types or tissues"/>
</dbReference>
<dbReference type="ExpressionAtlas" id="O15455">
    <property type="expression patterns" value="baseline and differential"/>
</dbReference>
<dbReference type="GO" id="GO:0005737">
    <property type="term" value="C:cytoplasm"/>
    <property type="evidence" value="ECO:0000314"/>
    <property type="project" value="BHF-UCL"/>
</dbReference>
<dbReference type="GO" id="GO:0005769">
    <property type="term" value="C:early endosome"/>
    <property type="evidence" value="ECO:0000314"/>
    <property type="project" value="UniProt"/>
</dbReference>
<dbReference type="GO" id="GO:0036020">
    <property type="term" value="C:endolysosome membrane"/>
    <property type="evidence" value="ECO:0000304"/>
    <property type="project" value="Reactome"/>
</dbReference>
<dbReference type="GO" id="GO:0005789">
    <property type="term" value="C:endoplasmic reticulum membrane"/>
    <property type="evidence" value="ECO:0000304"/>
    <property type="project" value="Reactome"/>
</dbReference>
<dbReference type="GO" id="GO:0010008">
    <property type="term" value="C:endosome membrane"/>
    <property type="evidence" value="ECO:0000250"/>
    <property type="project" value="UniProt"/>
</dbReference>
<dbReference type="GO" id="GO:0031012">
    <property type="term" value="C:extracellular matrix"/>
    <property type="evidence" value="ECO:0000318"/>
    <property type="project" value="GO_Central"/>
</dbReference>
<dbReference type="GO" id="GO:0005615">
    <property type="term" value="C:extracellular space"/>
    <property type="evidence" value="ECO:0000318"/>
    <property type="project" value="GO_Central"/>
</dbReference>
<dbReference type="GO" id="GO:0000139">
    <property type="term" value="C:Golgi membrane"/>
    <property type="evidence" value="ECO:0000304"/>
    <property type="project" value="Reactome"/>
</dbReference>
<dbReference type="GO" id="GO:0005765">
    <property type="term" value="C:lysosomal membrane"/>
    <property type="evidence" value="ECO:0007005"/>
    <property type="project" value="UniProtKB"/>
</dbReference>
<dbReference type="GO" id="GO:0016020">
    <property type="term" value="C:membrane"/>
    <property type="evidence" value="ECO:0000303"/>
    <property type="project" value="UniProtKB"/>
</dbReference>
<dbReference type="GO" id="GO:0005886">
    <property type="term" value="C:plasma membrane"/>
    <property type="evidence" value="ECO:0000314"/>
    <property type="project" value="UniProt"/>
</dbReference>
<dbReference type="GO" id="GO:0003725">
    <property type="term" value="F:double-stranded RNA binding"/>
    <property type="evidence" value="ECO:0000314"/>
    <property type="project" value="UniProtKB"/>
</dbReference>
<dbReference type="GO" id="GO:0042802">
    <property type="term" value="F:identical protein binding"/>
    <property type="evidence" value="ECO:0000353"/>
    <property type="project" value="IntAct"/>
</dbReference>
<dbReference type="GO" id="GO:0038187">
    <property type="term" value="F:pattern recognition receptor activity"/>
    <property type="evidence" value="ECO:0000314"/>
    <property type="project" value="BHF-UCL"/>
</dbReference>
<dbReference type="GO" id="GO:0038023">
    <property type="term" value="F:signaling receptor activity"/>
    <property type="evidence" value="ECO:0000318"/>
    <property type="project" value="GO_Central"/>
</dbReference>
<dbReference type="GO" id="GO:0004888">
    <property type="term" value="F:transmembrane signaling receptor activity"/>
    <property type="evidence" value="ECO:0000314"/>
    <property type="project" value="UniProt"/>
</dbReference>
<dbReference type="GO" id="GO:0044389">
    <property type="term" value="F:ubiquitin-like protein ligase binding"/>
    <property type="evidence" value="ECO:0007669"/>
    <property type="project" value="Ensembl"/>
</dbReference>
<dbReference type="GO" id="GO:0007250">
    <property type="term" value="P:activation of NF-kappaB-inducing kinase activity"/>
    <property type="evidence" value="ECO:0000303"/>
    <property type="project" value="UniProtKB"/>
</dbReference>
<dbReference type="GO" id="GO:0071360">
    <property type="term" value="P:cellular response to exogenous dsRNA"/>
    <property type="evidence" value="ECO:0007669"/>
    <property type="project" value="Ensembl"/>
</dbReference>
<dbReference type="GO" id="GO:0035458">
    <property type="term" value="P:cellular response to interferon-beta"/>
    <property type="evidence" value="ECO:0007669"/>
    <property type="project" value="Ensembl"/>
</dbReference>
<dbReference type="GO" id="GO:0071260">
    <property type="term" value="P:cellular response to mechanical stimulus"/>
    <property type="evidence" value="ECO:0000270"/>
    <property type="project" value="UniProtKB"/>
</dbReference>
<dbReference type="GO" id="GO:0071346">
    <property type="term" value="P:cellular response to type II interferon"/>
    <property type="evidence" value="ECO:0007669"/>
    <property type="project" value="Ensembl"/>
</dbReference>
<dbReference type="GO" id="GO:0098586">
    <property type="term" value="P:cellular response to virus"/>
    <property type="evidence" value="ECO:0007669"/>
    <property type="project" value="Ensembl"/>
</dbReference>
<dbReference type="GO" id="GO:0071466">
    <property type="term" value="P:cellular response to xenobiotic stimulus"/>
    <property type="evidence" value="ECO:0007669"/>
    <property type="project" value="Ensembl"/>
</dbReference>
<dbReference type="GO" id="GO:0042742">
    <property type="term" value="P:defense response to bacterium"/>
    <property type="evidence" value="ECO:0000304"/>
    <property type="project" value="ProtInc"/>
</dbReference>
<dbReference type="GO" id="GO:0051607">
    <property type="term" value="P:defense response to virus"/>
    <property type="evidence" value="ECO:0000270"/>
    <property type="project" value="ARUK-UCL"/>
</dbReference>
<dbReference type="GO" id="GO:0009597">
    <property type="term" value="P:detection of virus"/>
    <property type="evidence" value="ECO:0000303"/>
    <property type="project" value="UniProtKB"/>
</dbReference>
<dbReference type="GO" id="GO:0097191">
    <property type="term" value="P:extrinsic apoptotic signaling pathway"/>
    <property type="evidence" value="ECO:0000314"/>
    <property type="project" value="UniProtKB"/>
</dbReference>
<dbReference type="GO" id="GO:0006972">
    <property type="term" value="P:hyperosmotic response"/>
    <property type="evidence" value="ECO:0000303"/>
    <property type="project" value="UniProtKB"/>
</dbReference>
<dbReference type="GO" id="GO:0090594">
    <property type="term" value="P:inflammatory response to wounding"/>
    <property type="evidence" value="ECO:0000314"/>
    <property type="project" value="UniProt"/>
</dbReference>
<dbReference type="GO" id="GO:0045087">
    <property type="term" value="P:innate immune response"/>
    <property type="evidence" value="ECO:0000304"/>
    <property type="project" value="BHF-UCL"/>
</dbReference>
<dbReference type="GO" id="GO:0007254">
    <property type="term" value="P:JNK cascade"/>
    <property type="evidence" value="ECO:0007669"/>
    <property type="project" value="Ensembl"/>
</dbReference>
<dbReference type="GO" id="GO:0008584">
    <property type="term" value="P:male gonad development"/>
    <property type="evidence" value="ECO:0007669"/>
    <property type="project" value="Ensembl"/>
</dbReference>
<dbReference type="GO" id="GO:0001774">
    <property type="term" value="P:microglial cell activation"/>
    <property type="evidence" value="ECO:0007669"/>
    <property type="project" value="Ensembl"/>
</dbReference>
<dbReference type="GO" id="GO:0097527">
    <property type="term" value="P:necroptotic signaling pathway"/>
    <property type="evidence" value="ECO:0000314"/>
    <property type="project" value="UniProtKB"/>
</dbReference>
<dbReference type="GO" id="GO:0045671">
    <property type="term" value="P:negative regulation of osteoclast differentiation"/>
    <property type="evidence" value="ECO:0000303"/>
    <property type="project" value="UniProtKB"/>
</dbReference>
<dbReference type="GO" id="GO:0045766">
    <property type="term" value="P:positive regulation of angiogenesis"/>
    <property type="evidence" value="ECO:0007669"/>
    <property type="project" value="Ensembl"/>
</dbReference>
<dbReference type="GO" id="GO:0043065">
    <property type="term" value="P:positive regulation of apoptotic process"/>
    <property type="evidence" value="ECO:0007669"/>
    <property type="project" value="Ensembl"/>
</dbReference>
<dbReference type="GO" id="GO:0043123">
    <property type="term" value="P:positive regulation of canonical NF-kappaB signal transduction"/>
    <property type="evidence" value="ECO:0000314"/>
    <property type="project" value="BHF-UCL"/>
</dbReference>
<dbReference type="GO" id="GO:0032722">
    <property type="term" value="P:positive regulation of chemokine production"/>
    <property type="evidence" value="ECO:0000314"/>
    <property type="project" value="BHF-UCL"/>
</dbReference>
<dbReference type="GO" id="GO:1900017">
    <property type="term" value="P:positive regulation of cytokine production involved in inflammatory response"/>
    <property type="evidence" value="ECO:0007669"/>
    <property type="project" value="Ensembl"/>
</dbReference>
<dbReference type="GO" id="GO:0010628">
    <property type="term" value="P:positive regulation of gene expression"/>
    <property type="evidence" value="ECO:0000315"/>
    <property type="project" value="UniProtKB"/>
</dbReference>
<dbReference type="GO" id="GO:0050729">
    <property type="term" value="P:positive regulation of inflammatory response"/>
    <property type="evidence" value="ECO:0000314"/>
    <property type="project" value="BHF-UCL"/>
</dbReference>
<dbReference type="GO" id="GO:0032727">
    <property type="term" value="P:positive regulation of interferon-alpha production"/>
    <property type="evidence" value="ECO:0000314"/>
    <property type="project" value="UniProtKB"/>
</dbReference>
<dbReference type="GO" id="GO:0032728">
    <property type="term" value="P:positive regulation of interferon-beta production"/>
    <property type="evidence" value="ECO:0000314"/>
    <property type="project" value="UniProtKB"/>
</dbReference>
<dbReference type="GO" id="GO:0032735">
    <property type="term" value="P:positive regulation of interleukin-12 production"/>
    <property type="evidence" value="ECO:0000250"/>
    <property type="project" value="BHF-UCL"/>
</dbReference>
<dbReference type="GO" id="GO:0032755">
    <property type="term" value="P:positive regulation of interleukin-6 production"/>
    <property type="evidence" value="ECO:0000314"/>
    <property type="project" value="BHF-UCL"/>
</dbReference>
<dbReference type="GO" id="GO:0032757">
    <property type="term" value="P:positive regulation of interleukin-8 production"/>
    <property type="evidence" value="ECO:0000314"/>
    <property type="project" value="BHF-UCL"/>
</dbReference>
<dbReference type="GO" id="GO:0046330">
    <property type="term" value="P:positive regulation of JNK cascade"/>
    <property type="evidence" value="ECO:0000314"/>
    <property type="project" value="UniProt"/>
</dbReference>
<dbReference type="GO" id="GO:0060907">
    <property type="term" value="P:positive regulation of macrophage cytokine production"/>
    <property type="evidence" value="ECO:0007669"/>
    <property type="project" value="Ensembl"/>
</dbReference>
<dbReference type="GO" id="GO:0045944">
    <property type="term" value="P:positive regulation of transcription by RNA polymerase II"/>
    <property type="evidence" value="ECO:0000250"/>
    <property type="project" value="BHF-UCL"/>
</dbReference>
<dbReference type="GO" id="GO:0032760">
    <property type="term" value="P:positive regulation of tumor necrosis factor production"/>
    <property type="evidence" value="ECO:0000250"/>
    <property type="project" value="BHF-UCL"/>
</dbReference>
<dbReference type="GO" id="GO:0032729">
    <property type="term" value="P:positive regulation of type II interferon production"/>
    <property type="evidence" value="ECO:0000314"/>
    <property type="project" value="UniProtKB"/>
</dbReference>
<dbReference type="GO" id="GO:0034346">
    <property type="term" value="P:positive regulation of type III interferon production"/>
    <property type="evidence" value="ECO:0007669"/>
    <property type="project" value="Ensembl"/>
</dbReference>
<dbReference type="GO" id="GO:0002730">
    <property type="term" value="P:regulation of dendritic cell cytokine production"/>
    <property type="evidence" value="ECO:0007669"/>
    <property type="project" value="Ensembl"/>
</dbReference>
<dbReference type="GO" id="GO:0043331">
    <property type="term" value="P:response to dsRNA"/>
    <property type="evidence" value="ECO:0000318"/>
    <property type="project" value="GO_Central"/>
</dbReference>
<dbReference type="GO" id="GO:0043330">
    <property type="term" value="P:response to exogenous dsRNA"/>
    <property type="evidence" value="ECO:0000314"/>
    <property type="project" value="MGI"/>
</dbReference>
<dbReference type="GO" id="GO:0007165">
    <property type="term" value="P:signal transduction"/>
    <property type="evidence" value="ECO:0000304"/>
    <property type="project" value="ProtInc"/>
</dbReference>
<dbReference type="GO" id="GO:0034138">
    <property type="term" value="P:toll-like receptor 3 signaling pathway"/>
    <property type="evidence" value="ECO:0000314"/>
    <property type="project" value="BHF-UCL"/>
</dbReference>
<dbReference type="GO" id="GO:0002224">
    <property type="term" value="P:toll-like receptor signaling pathway"/>
    <property type="evidence" value="ECO:0000314"/>
    <property type="project" value="UniProt"/>
</dbReference>
<dbReference type="GO" id="GO:0034343">
    <property type="term" value="P:type III interferon production"/>
    <property type="evidence" value="ECO:0007669"/>
    <property type="project" value="Ensembl"/>
</dbReference>
<dbReference type="FunFam" id="3.40.50.10140:FF:000008">
    <property type="entry name" value="Toll-like receptor 3"/>
    <property type="match status" value="1"/>
</dbReference>
<dbReference type="FunFam" id="3.80.10.10:FF:000137">
    <property type="entry name" value="Toll-like receptor 3"/>
    <property type="match status" value="1"/>
</dbReference>
<dbReference type="Gene3D" id="3.80.10.10">
    <property type="entry name" value="Ribonuclease Inhibitor"/>
    <property type="match status" value="1"/>
</dbReference>
<dbReference type="Gene3D" id="3.40.50.10140">
    <property type="entry name" value="Toll/interleukin-1 receptor homology (TIR) domain"/>
    <property type="match status" value="1"/>
</dbReference>
<dbReference type="InterPro" id="IPR000483">
    <property type="entry name" value="Cys-rich_flank_reg_C"/>
</dbReference>
<dbReference type="InterPro" id="IPR001611">
    <property type="entry name" value="Leu-rich_rpt"/>
</dbReference>
<dbReference type="InterPro" id="IPR003591">
    <property type="entry name" value="Leu-rich_rpt_typical-subtyp"/>
</dbReference>
<dbReference type="InterPro" id="IPR032675">
    <property type="entry name" value="LRR_dom_sf"/>
</dbReference>
<dbReference type="InterPro" id="IPR000157">
    <property type="entry name" value="TIR_dom"/>
</dbReference>
<dbReference type="InterPro" id="IPR041015">
    <property type="entry name" value="TLR3_TMD"/>
</dbReference>
<dbReference type="InterPro" id="IPR035897">
    <property type="entry name" value="Toll_tir_struct_dom_sf"/>
</dbReference>
<dbReference type="PANTHER" id="PTHR24365">
    <property type="entry name" value="TOLL-LIKE RECEPTOR"/>
    <property type="match status" value="1"/>
</dbReference>
<dbReference type="PANTHER" id="PTHR24365:SF524">
    <property type="entry name" value="TOLL-LIKE RECEPTOR 3"/>
    <property type="match status" value="1"/>
</dbReference>
<dbReference type="Pfam" id="PF13516">
    <property type="entry name" value="LRR_6"/>
    <property type="match status" value="1"/>
</dbReference>
<dbReference type="Pfam" id="PF13855">
    <property type="entry name" value="LRR_8"/>
    <property type="match status" value="6"/>
</dbReference>
<dbReference type="Pfam" id="PF01582">
    <property type="entry name" value="TIR"/>
    <property type="match status" value="1"/>
</dbReference>
<dbReference type="Pfam" id="PF17968">
    <property type="entry name" value="Tlr3_TMD"/>
    <property type="match status" value="1"/>
</dbReference>
<dbReference type="PRINTS" id="PR00019">
    <property type="entry name" value="LEURICHRPT"/>
</dbReference>
<dbReference type="SMART" id="SM00365">
    <property type="entry name" value="LRR_SD22"/>
    <property type="match status" value="8"/>
</dbReference>
<dbReference type="SMART" id="SM00369">
    <property type="entry name" value="LRR_TYP"/>
    <property type="match status" value="16"/>
</dbReference>
<dbReference type="SMART" id="SM00082">
    <property type="entry name" value="LRRCT"/>
    <property type="match status" value="1"/>
</dbReference>
<dbReference type="SMART" id="SM00255">
    <property type="entry name" value="TIR"/>
    <property type="match status" value="1"/>
</dbReference>
<dbReference type="SUPFAM" id="SSF52058">
    <property type="entry name" value="L domain-like"/>
    <property type="match status" value="2"/>
</dbReference>
<dbReference type="SUPFAM" id="SSF52200">
    <property type="entry name" value="Toll/Interleukin receptor TIR domain"/>
    <property type="match status" value="1"/>
</dbReference>
<dbReference type="PROSITE" id="PS51450">
    <property type="entry name" value="LRR"/>
    <property type="match status" value="19"/>
</dbReference>
<dbReference type="PROSITE" id="PS50104">
    <property type="entry name" value="TIR"/>
    <property type="match status" value="1"/>
</dbReference>
<protein>
    <recommendedName>
        <fullName evidence="29">Toll-like receptor 3</fullName>
    </recommendedName>
    <cdAntigenName>CD283</cdAntigenName>
</protein>
<feature type="signal peptide" evidence="6">
    <location>
        <begin position="1"/>
        <end position="23"/>
    </location>
</feature>
<feature type="chain" id="PRO_0000034715" description="Toll-like receptor 3">
    <location>
        <begin position="24"/>
        <end position="904"/>
    </location>
</feature>
<feature type="topological domain" description="Lumenal" evidence="1">
    <location>
        <begin position="24"/>
        <end position="704"/>
    </location>
</feature>
<feature type="transmembrane region" description="Helical" evidence="1">
    <location>
        <begin position="705"/>
        <end position="725"/>
    </location>
</feature>
<feature type="topological domain" description="Cytoplasmic" evidence="1">
    <location>
        <begin position="726"/>
        <end position="904"/>
    </location>
</feature>
<feature type="domain" description="LRRNT">
    <location>
        <begin position="24"/>
        <end position="51"/>
    </location>
</feature>
<feature type="repeat" description="LRR 1">
    <location>
        <begin position="52"/>
        <end position="73"/>
    </location>
</feature>
<feature type="repeat" description="LRR 2">
    <location>
        <begin position="76"/>
        <end position="97"/>
    </location>
</feature>
<feature type="repeat" description="LRR 3">
    <location>
        <begin position="100"/>
        <end position="121"/>
    </location>
</feature>
<feature type="repeat" description="LRR 4">
    <location>
        <begin position="124"/>
        <end position="145"/>
    </location>
</feature>
<feature type="repeat" description="LRR 5">
    <location>
        <begin position="148"/>
        <end position="168"/>
    </location>
</feature>
<feature type="repeat" description="LRR 6">
    <location>
        <begin position="172"/>
        <end position="193"/>
    </location>
</feature>
<feature type="repeat" description="LRR 7">
    <location>
        <begin position="198"/>
        <end position="219"/>
    </location>
</feature>
<feature type="repeat" description="LRR 8">
    <location>
        <begin position="222"/>
        <end position="244"/>
    </location>
</feature>
<feature type="repeat" description="LRR 9">
    <location>
        <begin position="249"/>
        <end position="270"/>
    </location>
</feature>
<feature type="repeat" description="LRR 10">
    <location>
        <begin position="275"/>
        <end position="296"/>
    </location>
</feature>
<feature type="repeat" description="LRR 11">
    <location>
        <begin position="299"/>
        <end position="320"/>
    </location>
</feature>
<feature type="repeat" description="LRR 12">
    <location>
        <begin position="323"/>
        <end position="344"/>
    </location>
</feature>
<feature type="repeat" description="LRR 13">
    <location>
        <begin position="356"/>
        <end position="377"/>
    </location>
</feature>
<feature type="repeat" description="LRR 14">
    <location>
        <begin position="380"/>
        <end position="400"/>
    </location>
</feature>
<feature type="repeat" description="LRR 15">
    <location>
        <begin position="408"/>
        <end position="429"/>
    </location>
</feature>
<feature type="repeat" description="LRR 16">
    <location>
        <begin position="432"/>
        <end position="454"/>
    </location>
</feature>
<feature type="repeat" description="LRR 17">
    <location>
        <begin position="465"/>
        <end position="486"/>
    </location>
</feature>
<feature type="repeat" description="LRR 18">
    <location>
        <begin position="507"/>
        <end position="528"/>
    </location>
</feature>
<feature type="repeat" description="LRR 19">
    <location>
        <begin position="531"/>
        <end position="552"/>
    </location>
</feature>
<feature type="repeat" description="LRR 20">
    <location>
        <begin position="563"/>
        <end position="584"/>
    </location>
</feature>
<feature type="repeat" description="LRR 21">
    <location>
        <begin position="587"/>
        <end position="608"/>
    </location>
</feature>
<feature type="repeat" description="LRR 22">
    <location>
        <begin position="611"/>
        <end position="632"/>
    </location>
</feature>
<feature type="domain" description="LRRCT">
    <location>
        <begin position="645"/>
        <end position="698"/>
    </location>
</feature>
<feature type="domain" description="TIR" evidence="2">
    <location>
        <begin position="754"/>
        <end position="897"/>
    </location>
</feature>
<feature type="modified residue" description="Phosphotyrosine" evidence="13">
    <location>
        <position position="759"/>
    </location>
</feature>
<feature type="modified residue" description="Phosphotyrosine" evidence="13">
    <location>
        <position position="858"/>
    </location>
</feature>
<feature type="glycosylation site" description="N-linked (GlcNAc...) asparagine" evidence="8 17 19">
    <location>
        <position position="52"/>
    </location>
</feature>
<feature type="glycosylation site" description="N-linked (GlcNAc...) asparagine" evidence="17">
    <location>
        <position position="57"/>
    </location>
</feature>
<feature type="glycosylation site" description="N-linked (GlcNAc...) asparagine" evidence="8 19">
    <location>
        <position position="70"/>
    </location>
</feature>
<feature type="glycosylation site" description="N-linked (GlcNAc...) asparagine" evidence="7 19">
    <location>
        <position position="124"/>
    </location>
</feature>
<feature type="glycosylation site" description="N-linked (GlcNAc...) asparagine" evidence="8">
    <location>
        <position position="196"/>
    </location>
</feature>
<feature type="glycosylation site" description="N-linked (GlcNAc...) asparagine" evidence="19">
    <location>
        <position position="247"/>
    </location>
</feature>
<feature type="glycosylation site" description="N-linked (GlcNAc...) asparagine" evidence="7 8 19">
    <location>
        <position position="252"/>
    </location>
</feature>
<feature type="glycosylation site" description="N-linked (GlcNAc...) asparagine" evidence="8 19">
    <location>
        <position position="265"/>
    </location>
</feature>
<feature type="glycosylation site" description="N-linked (GlcNAc...) asparagine" evidence="7 8 19">
    <location>
        <position position="275"/>
    </location>
</feature>
<feature type="glycosylation site" description="N-linked (GlcNAc...) asparagine" evidence="7 8 19">
    <location>
        <position position="291"/>
    </location>
</feature>
<feature type="glycosylation site" description="N-linked (GlcNAc...) asparagine" evidence="7 8 19">
    <location>
        <position position="398"/>
    </location>
</feature>
<feature type="glycosylation site" description="N-linked (GlcNAc...) asparagine" evidence="7 8 19">
    <location>
        <position position="413"/>
    </location>
</feature>
<feature type="glycosylation site" description="N-linked (GlcNAc...) asparagine" evidence="7 8 19">
    <location>
        <position position="507"/>
    </location>
</feature>
<feature type="glycosylation site" description="N-linked (GlcNAc...) asparagine" evidence="8">
    <location>
        <position position="636"/>
    </location>
</feature>
<feature type="glycosylation site" description="N-linked (GlcNAc...) asparagine" evidence="1">
    <location>
        <position position="662"/>
    </location>
</feature>
<feature type="disulfide bond">
    <location>
        <begin position="28"/>
        <end position="37"/>
    </location>
</feature>
<feature type="disulfide bond">
    <location>
        <begin position="95"/>
        <end position="122"/>
    </location>
</feature>
<feature type="disulfide bond">
    <location>
        <begin position="649"/>
        <end position="677"/>
    </location>
</feature>
<feature type="disulfide bond">
    <location>
        <begin position="651"/>
        <end position="696"/>
    </location>
</feature>
<feature type="cross-link" description="Glycyl lysine isopeptide (Lys-Gly) (interchain with G-Cter in ubiquitin)" evidence="26">
    <location>
        <position position="765"/>
    </location>
</feature>
<feature type="cross-link" description="Glycyl lysine isopeptide (Lys-Gly) (interchain with G-Cter in ubiquitin)" evidence="26">
    <location>
        <position position="812"/>
    </location>
</feature>
<feature type="cross-link" description="Glycyl lysine isopeptide (Lys-Gly) (interchain with G-Cter in ubiquitin)" evidence="23">
    <location>
        <position position="831"/>
    </location>
</feature>
<feature type="splice variant" id="VSP_054188" description="In isoform 2." evidence="28">
    <location>
        <begin position="1"/>
        <end position="277"/>
    </location>
</feature>
<feature type="sequence variant" id="VAR_084046" description="No effect on IFNL1 induction." evidence="24">
    <original>S</original>
    <variation>P</variation>
    <location>
        <position position="134"/>
    </location>
</feature>
<feature type="sequence variant" id="VAR_084047" description="No effect on IFNL1 induction; dbSNP:rs780051344." evidence="24">
    <original>R</original>
    <variation>G</variation>
    <location>
        <position position="251"/>
    </location>
</feature>
<feature type="sequence variant" id="VAR_052361" description="In dbSNP:rs5743316.">
    <original>N</original>
    <variation>I</variation>
    <location>
        <position position="284"/>
    </location>
</feature>
<feature type="sequence variant" id="VAR_052362" description="In dbSNP:rs5743317.">
    <original>Y</original>
    <variation>D</variation>
    <location>
        <position position="307"/>
    </location>
</feature>
<feature type="sequence variant" id="VAR_021976" description="In dbSNP:rs3775291." evidence="5 16 18 27">
    <original>L</original>
    <variation>F</variation>
    <location>
        <position position="412"/>
    </location>
</feature>
<feature type="sequence variant" id="VAR_054887" description="In IMD83; causes TLR3 deficiency and predisposition to herpes simplex encephalitis; inhibition of IFNL1 induction; dbSNP:rs121434431." evidence="14 24">
    <original>P</original>
    <variation>S</variation>
    <location>
        <position position="554"/>
    </location>
</feature>
<feature type="sequence variant" id="VAR_084048" description="No effect on IFNL1 induction; dbSNP:rs988586598 and dbSNP:rs774476397." evidence="24">
    <original>F</original>
    <variation>L</variation>
    <location>
        <position position="732"/>
    </location>
</feature>
<feature type="sequence variant" id="VAR_024664" description="In dbSNP:rs5743318.">
    <original>S</original>
    <variation>T</variation>
    <location>
        <position position="737"/>
    </location>
</feature>
<feature type="sequence variant" id="VAR_084049" description="Inhibition of IFNL1 induction." evidence="24">
    <location>
        <begin position="746"/>
        <end position="904"/>
    </location>
</feature>
<feature type="sequence variant" id="VAR_084050" description="Inhibition of IFNL1 induction." evidence="24">
    <location>
        <begin position="769"/>
        <end position="904"/>
    </location>
</feature>
<feature type="sequence variant" id="VAR_084051" description="Inhibition of IFNL1 induction; dbSNP:rs199768900." evidence="24">
    <original>R</original>
    <variation>Q</variation>
    <location>
        <position position="867"/>
    </location>
</feature>
<feature type="sequence variant" id="VAR_084052" description="Inhibition of IFNL1 induction." evidence="24">
    <original>M</original>
    <variation>V</variation>
    <location>
        <position position="870"/>
    </location>
</feature>
<feature type="mutagenesis site" description="Reduced response to ds-RNA." evidence="9">
    <original>C</original>
    <variation>A</variation>
    <location>
        <position position="95"/>
    </location>
</feature>
<feature type="mutagenesis site" description="Reduced response to ds-RNA." evidence="9">
    <original>C</original>
    <variation>A</variation>
    <location>
        <position position="122"/>
    </location>
</feature>
<feature type="mutagenesis site" description="Reduced expression levels; when associated with R-247." evidence="9">
    <original>N</original>
    <variation>G</variation>
    <location>
        <position position="196"/>
    </location>
</feature>
<feature type="mutagenesis site" description="Reduced response to ds-RNA. Reduced expression levels; when associated with G-196." evidence="9">
    <original>N</original>
    <variation>R</variation>
    <location>
        <position position="247"/>
    </location>
</feature>
<feature type="mutagenesis site" description="No effect." evidence="10">
    <original>H</original>
    <variation>A</variation>
    <location>
        <position position="539"/>
    </location>
</feature>
<feature type="mutagenesis site" description="Loss of RNA binding. Constitutive activation of NF-kappa-B." evidence="10">
    <original>H</original>
    <variation>E</variation>
    <location>
        <position position="539"/>
    </location>
</feature>
<feature type="mutagenesis site" description="Loss of RNA binding. Abolishes activation of NF-kappa-B." evidence="10">
    <original>N</original>
    <variation>A</variation>
    <location>
        <position position="541"/>
    </location>
</feature>
<feature type="mutagenesis site" description="Reduced activation of NF-kappa-B in response to ds-RNA. Reduced induction of IL-8 in response to ds-RNA. Loss of interaction with WDFY1." evidence="13 21">
    <original>Y</original>
    <variation>F</variation>
    <location>
        <position position="759"/>
    </location>
</feature>
<feature type="mutagenesis site" description="Loss of ubiquitination by ZNRF1." evidence="26">
    <original>K</original>
    <variation>R</variation>
    <location>
        <position position="812"/>
    </location>
</feature>
<feature type="mutagenesis site" description="Loss of ubiquitination by TRIM3." evidence="23">
    <original>K</original>
    <variation>R</variation>
    <location>
        <position position="831"/>
    </location>
</feature>
<feature type="mutagenesis site" description="Loss of interaction with WDFY1." evidence="21">
    <original>Y</original>
    <variation>F</variation>
    <location>
        <position position="858"/>
    </location>
</feature>
<feature type="sequence conflict" description="In Ref. 5; BAG36884." evidence="29" ref="5">
    <original>G</original>
    <variation>R</variation>
    <location>
        <position position="290"/>
    </location>
</feature>
<feature type="sequence conflict" description="In Ref. 8; AAH94737." evidence="29" ref="8">
    <original>D</original>
    <variation>N</variation>
    <location>
        <position position="575"/>
    </location>
</feature>
<feature type="sequence conflict" description="In Ref. 5; BAG36884." evidence="29" ref="5">
    <original>V</original>
    <variation>A</variation>
    <location>
        <position position="605"/>
    </location>
</feature>
<feature type="sequence conflict" description="In Ref. 5; BAG36884." evidence="29" ref="5">
    <original>E</original>
    <variation>G</variation>
    <location>
        <position position="663"/>
    </location>
</feature>
<feature type="strand" evidence="32">
    <location>
        <begin position="31"/>
        <end position="36"/>
    </location>
</feature>
<feature type="strand" evidence="33">
    <location>
        <begin position="47"/>
        <end position="49"/>
    </location>
</feature>
<feature type="strand" evidence="32">
    <location>
        <begin position="54"/>
        <end position="57"/>
    </location>
</feature>
<feature type="helix" evidence="32">
    <location>
        <begin position="68"/>
        <end position="74"/>
    </location>
</feature>
<feature type="strand" evidence="32">
    <location>
        <begin position="78"/>
        <end position="81"/>
    </location>
</feature>
<feature type="helix" evidence="32">
    <location>
        <begin position="94"/>
        <end position="97"/>
    </location>
</feature>
<feature type="strand" evidence="32">
    <location>
        <begin position="103"/>
        <end position="105"/>
    </location>
</feature>
<feature type="strand" evidence="34">
    <location>
        <begin position="108"/>
        <end position="110"/>
    </location>
</feature>
<feature type="turn" evidence="32">
    <location>
        <begin position="118"/>
        <end position="121"/>
    </location>
</feature>
<feature type="strand" evidence="32">
    <location>
        <begin position="126"/>
        <end position="129"/>
    </location>
</feature>
<feature type="turn" evidence="32">
    <location>
        <begin position="142"/>
        <end position="145"/>
    </location>
</feature>
<feature type="strand" evidence="32">
    <location>
        <begin position="151"/>
        <end position="153"/>
    </location>
</feature>
<feature type="strand" evidence="32">
    <location>
        <begin position="166"/>
        <end position="168"/>
    </location>
</feature>
<feature type="strand" evidence="32">
    <location>
        <begin position="175"/>
        <end position="177"/>
    </location>
</feature>
<feature type="helix" evidence="32">
    <location>
        <begin position="188"/>
        <end position="191"/>
    </location>
</feature>
<feature type="helix" evidence="32">
    <location>
        <begin position="192"/>
        <end position="194"/>
    </location>
</feature>
<feature type="strand" evidence="32">
    <location>
        <begin position="198"/>
        <end position="203"/>
    </location>
</feature>
<feature type="helix" evidence="32">
    <location>
        <begin position="216"/>
        <end position="219"/>
    </location>
</feature>
<feature type="strand" evidence="32">
    <location>
        <begin position="220"/>
        <end position="223"/>
    </location>
</feature>
<feature type="strand" evidence="32">
    <location>
        <begin position="225"/>
        <end position="227"/>
    </location>
</feature>
<feature type="helix" evidence="32">
    <location>
        <begin position="234"/>
        <end position="245"/>
    </location>
</feature>
<feature type="strand" evidence="32">
    <location>
        <begin position="252"/>
        <end position="254"/>
    </location>
</feature>
<feature type="turn" evidence="32">
    <location>
        <begin position="265"/>
        <end position="268"/>
    </location>
</feature>
<feature type="helix" evidence="32">
    <location>
        <begin position="269"/>
        <end position="273"/>
    </location>
</feature>
<feature type="strand" evidence="32">
    <location>
        <begin position="278"/>
        <end position="280"/>
    </location>
</feature>
<feature type="turn" evidence="32">
    <location>
        <begin position="291"/>
        <end position="296"/>
    </location>
</feature>
<feature type="strand" evidence="32">
    <location>
        <begin position="302"/>
        <end position="304"/>
    </location>
</feature>
<feature type="strand" evidence="32">
    <location>
        <begin position="310"/>
        <end position="313"/>
    </location>
</feature>
<feature type="turn" evidence="32">
    <location>
        <begin position="315"/>
        <end position="320"/>
    </location>
</feature>
<feature type="strand" evidence="32">
    <location>
        <begin position="326"/>
        <end position="328"/>
    </location>
</feature>
<feature type="turn" evidence="36">
    <location>
        <begin position="338"/>
        <end position="340"/>
    </location>
</feature>
<feature type="turn" evidence="32">
    <location>
        <begin position="348"/>
        <end position="353"/>
    </location>
</feature>
<feature type="strand" evidence="32">
    <location>
        <begin position="359"/>
        <end position="361"/>
    </location>
</feature>
<feature type="turn" evidence="32">
    <location>
        <begin position="372"/>
        <end position="377"/>
    </location>
</feature>
<feature type="strand" evidence="32">
    <location>
        <begin position="383"/>
        <end position="385"/>
    </location>
</feature>
<feature type="strand" evidence="36">
    <location>
        <begin position="390"/>
        <end position="392"/>
    </location>
</feature>
<feature type="turn" evidence="32">
    <location>
        <begin position="398"/>
        <end position="401"/>
    </location>
</feature>
<feature type="helix" evidence="32">
    <location>
        <begin position="402"/>
        <end position="404"/>
    </location>
</feature>
<feature type="strand" evidence="37">
    <location>
        <begin position="405"/>
        <end position="407"/>
    </location>
</feature>
<feature type="strand" evidence="32">
    <location>
        <begin position="411"/>
        <end position="413"/>
    </location>
</feature>
<feature type="turn" evidence="32">
    <location>
        <begin position="424"/>
        <end position="429"/>
    </location>
</feature>
<feature type="strand" evidence="32">
    <location>
        <begin position="435"/>
        <end position="437"/>
    </location>
</feature>
<feature type="strand" evidence="32">
    <location>
        <begin position="444"/>
        <end position="446"/>
    </location>
</feature>
<feature type="helix" evidence="32">
    <location>
        <begin position="450"/>
        <end position="452"/>
    </location>
</feature>
<feature type="strand" evidence="32">
    <location>
        <begin position="460"/>
        <end position="462"/>
    </location>
</feature>
<feature type="strand" evidence="32">
    <location>
        <begin position="467"/>
        <end position="470"/>
    </location>
</feature>
<feature type="turn" evidence="32">
    <location>
        <begin position="473"/>
        <end position="478"/>
    </location>
</feature>
<feature type="strand" evidence="32">
    <location>
        <begin position="484"/>
        <end position="486"/>
    </location>
</feature>
<feature type="strand" evidence="37">
    <location>
        <begin position="492"/>
        <end position="494"/>
    </location>
</feature>
<feature type="turn" evidence="32">
    <location>
        <begin position="501"/>
        <end position="504"/>
    </location>
</feature>
<feature type="strand" evidence="32">
    <location>
        <begin position="510"/>
        <end position="512"/>
    </location>
</feature>
<feature type="turn" evidence="32">
    <location>
        <begin position="523"/>
        <end position="528"/>
    </location>
</feature>
<feature type="strand" evidence="32">
    <location>
        <begin position="534"/>
        <end position="536"/>
    </location>
</feature>
<feature type="helix" evidence="32">
    <location>
        <begin position="543"/>
        <end position="546"/>
    </location>
</feature>
<feature type="strand" evidence="35">
    <location>
        <begin position="548"/>
        <end position="550"/>
    </location>
</feature>
<feature type="turn" evidence="32">
    <location>
        <begin position="557"/>
        <end position="560"/>
    </location>
</feature>
<feature type="strand" evidence="32">
    <location>
        <begin position="566"/>
        <end position="568"/>
    </location>
</feature>
<feature type="turn" evidence="32">
    <location>
        <begin position="579"/>
        <end position="584"/>
    </location>
</feature>
<feature type="strand" evidence="32">
    <location>
        <begin position="590"/>
        <end position="592"/>
    </location>
</feature>
<feature type="turn" evidence="32">
    <location>
        <begin position="603"/>
        <end position="608"/>
    </location>
</feature>
<feature type="strand" evidence="32">
    <location>
        <begin position="614"/>
        <end position="616"/>
    </location>
</feature>
<feature type="helix" evidence="32">
    <location>
        <begin position="627"/>
        <end position="634"/>
    </location>
</feature>
<feature type="strand" evidence="32">
    <location>
        <begin position="638"/>
        <end position="641"/>
    </location>
</feature>
<feature type="turn" evidence="36">
    <location>
        <begin position="651"/>
        <end position="653"/>
    </location>
</feature>
<feature type="strand" evidence="32">
    <location>
        <begin position="655"/>
        <end position="658"/>
    </location>
</feature>
<feature type="helix" evidence="36">
    <location>
        <begin position="671"/>
        <end position="674"/>
    </location>
</feature>
<feature type="strand" evidence="36">
    <location>
        <begin position="676"/>
        <end position="680"/>
    </location>
</feature>
<feature type="turn" evidence="36">
    <location>
        <begin position="681"/>
        <end position="685"/>
    </location>
</feature>
<feature type="helix" evidence="33">
    <location>
        <begin position="688"/>
        <end position="690"/>
    </location>
</feature>
<feature type="strand" evidence="35">
    <location>
        <begin position="694"/>
        <end position="696"/>
    </location>
</feature>
<feature type="turn" evidence="35">
    <location>
        <begin position="697"/>
        <end position="699"/>
    </location>
</feature>
<feature type="helix" evidence="35">
    <location>
        <begin position="702"/>
        <end position="725"/>
    </location>
</feature>
<feature type="helix" evidence="38">
    <location>
        <begin position="738"/>
        <end position="745"/>
    </location>
</feature>
<name>TLR3_HUMAN</name>
<reference key="1">
    <citation type="journal article" date="1998" name="Proc. Natl. Acad. Sci. U.S.A.">
        <title>A family of human receptors structurally related to Drosophila Toll.</title>
        <authorList>
            <person name="Rock F.L."/>
            <person name="Hardiman G."/>
            <person name="Timans J.C."/>
            <person name="Kastelein R.A."/>
            <person name="Bazan J.F."/>
        </authorList>
    </citation>
    <scope>NUCLEOTIDE SEQUENCE [MRNA] (ISOFORM 1)</scope>
</reference>
<reference key="2">
    <citation type="journal article" date="2006" name="J. Mol. Neurosci.">
        <title>The innate immune facet of brain: human neurons express TLR-3 and sense viral dsRNA.</title>
        <authorList>
            <person name="Lafon M."/>
            <person name="Megret F."/>
            <person name="Lafage M."/>
            <person name="Prehaud C."/>
        </authorList>
    </citation>
    <scope>NUCLEOTIDE SEQUENCE [MRNA] (ISOFORM 1)</scope>
    <scope>TISSUE SPECIFICITY</scope>
    <source>
        <tissue>Neuron</tissue>
    </source>
</reference>
<reference key="3">
    <citation type="journal article" date="2008" name="Immunogenetics">
        <title>Natural selection in the TLR-related genes in the course of primate evolution.</title>
        <authorList>
            <person name="Nakajima T."/>
            <person name="Ohtani H."/>
            <person name="Satta Y."/>
            <person name="Uno Y."/>
            <person name="Akari H."/>
            <person name="Ishida T."/>
            <person name="Kimura A."/>
        </authorList>
    </citation>
    <scope>NUCLEOTIDE SEQUENCE [MRNA] (ISOFORM 1)</scope>
</reference>
<reference key="4">
    <citation type="submission" date="2006-01" db="EMBL/GenBank/DDBJ databases">
        <title>TLR polymorphism.</title>
        <authorList>
            <person name="Macquin C."/>
            <person name="Bahram S."/>
        </authorList>
    </citation>
    <scope>NUCLEOTIDE SEQUENCE [GENOMIC DNA]</scope>
    <scope>VARIANT PHE-412</scope>
</reference>
<reference key="5">
    <citation type="journal article" date="2004" name="Nat. Genet.">
        <title>Complete sequencing and characterization of 21,243 full-length human cDNAs.</title>
        <authorList>
            <person name="Ota T."/>
            <person name="Suzuki Y."/>
            <person name="Nishikawa T."/>
            <person name="Otsuki T."/>
            <person name="Sugiyama T."/>
            <person name="Irie R."/>
            <person name="Wakamatsu A."/>
            <person name="Hayashi K."/>
            <person name="Sato H."/>
            <person name="Nagai K."/>
            <person name="Kimura K."/>
            <person name="Makita H."/>
            <person name="Sekine M."/>
            <person name="Obayashi M."/>
            <person name="Nishi T."/>
            <person name="Shibahara T."/>
            <person name="Tanaka T."/>
            <person name="Ishii S."/>
            <person name="Yamamoto J."/>
            <person name="Saito K."/>
            <person name="Kawai Y."/>
            <person name="Isono Y."/>
            <person name="Nakamura Y."/>
            <person name="Nagahari K."/>
            <person name="Murakami K."/>
            <person name="Yasuda T."/>
            <person name="Iwayanagi T."/>
            <person name="Wagatsuma M."/>
            <person name="Shiratori A."/>
            <person name="Sudo H."/>
            <person name="Hosoiri T."/>
            <person name="Kaku Y."/>
            <person name="Kodaira H."/>
            <person name="Kondo H."/>
            <person name="Sugawara M."/>
            <person name="Takahashi M."/>
            <person name="Kanda K."/>
            <person name="Yokoi T."/>
            <person name="Furuya T."/>
            <person name="Kikkawa E."/>
            <person name="Omura Y."/>
            <person name="Abe K."/>
            <person name="Kamihara K."/>
            <person name="Katsuta N."/>
            <person name="Sato K."/>
            <person name="Tanikawa M."/>
            <person name="Yamazaki M."/>
            <person name="Ninomiya K."/>
            <person name="Ishibashi T."/>
            <person name="Yamashita H."/>
            <person name="Murakawa K."/>
            <person name="Fujimori K."/>
            <person name="Tanai H."/>
            <person name="Kimata M."/>
            <person name="Watanabe M."/>
            <person name="Hiraoka S."/>
            <person name="Chiba Y."/>
            <person name="Ishida S."/>
            <person name="Ono Y."/>
            <person name="Takiguchi S."/>
            <person name="Watanabe S."/>
            <person name="Yosida M."/>
            <person name="Hotuta T."/>
            <person name="Kusano J."/>
            <person name="Kanehori K."/>
            <person name="Takahashi-Fujii A."/>
            <person name="Hara H."/>
            <person name="Tanase T.-O."/>
            <person name="Nomura Y."/>
            <person name="Togiya S."/>
            <person name="Komai F."/>
            <person name="Hara R."/>
            <person name="Takeuchi K."/>
            <person name="Arita M."/>
            <person name="Imose N."/>
            <person name="Musashino K."/>
            <person name="Yuuki H."/>
            <person name="Oshima A."/>
            <person name="Sasaki N."/>
            <person name="Aotsuka S."/>
            <person name="Yoshikawa Y."/>
            <person name="Matsunawa H."/>
            <person name="Ichihara T."/>
            <person name="Shiohata N."/>
            <person name="Sano S."/>
            <person name="Moriya S."/>
            <person name="Momiyama H."/>
            <person name="Satoh N."/>
            <person name="Takami S."/>
            <person name="Terashima Y."/>
            <person name="Suzuki O."/>
            <person name="Nakagawa S."/>
            <person name="Senoh A."/>
            <person name="Mizoguchi H."/>
            <person name="Goto Y."/>
            <person name="Shimizu F."/>
            <person name="Wakebe H."/>
            <person name="Hishigaki H."/>
            <person name="Watanabe T."/>
            <person name="Sugiyama A."/>
            <person name="Takemoto M."/>
            <person name="Kawakami B."/>
            <person name="Yamazaki M."/>
            <person name="Watanabe K."/>
            <person name="Kumagai A."/>
            <person name="Itakura S."/>
            <person name="Fukuzumi Y."/>
            <person name="Fujimori Y."/>
            <person name="Komiyama M."/>
            <person name="Tashiro H."/>
            <person name="Tanigami A."/>
            <person name="Fujiwara T."/>
            <person name="Ono T."/>
            <person name="Yamada K."/>
            <person name="Fujii Y."/>
            <person name="Ozaki K."/>
            <person name="Hirao M."/>
            <person name="Ohmori Y."/>
            <person name="Kawabata A."/>
            <person name="Hikiji T."/>
            <person name="Kobatake N."/>
            <person name="Inagaki H."/>
            <person name="Ikema Y."/>
            <person name="Okamoto S."/>
            <person name="Okitani R."/>
            <person name="Kawakami T."/>
            <person name="Noguchi S."/>
            <person name="Itoh T."/>
            <person name="Shigeta K."/>
            <person name="Senba T."/>
            <person name="Matsumura K."/>
            <person name="Nakajima Y."/>
            <person name="Mizuno T."/>
            <person name="Morinaga M."/>
            <person name="Sasaki M."/>
            <person name="Togashi T."/>
            <person name="Oyama M."/>
            <person name="Hata H."/>
            <person name="Watanabe M."/>
            <person name="Komatsu T."/>
            <person name="Mizushima-Sugano J."/>
            <person name="Satoh T."/>
            <person name="Shirai Y."/>
            <person name="Takahashi Y."/>
            <person name="Nakagawa K."/>
            <person name="Okumura K."/>
            <person name="Nagase T."/>
            <person name="Nomura N."/>
            <person name="Kikuchi H."/>
            <person name="Masuho Y."/>
            <person name="Yamashita R."/>
            <person name="Nakai K."/>
            <person name="Yada T."/>
            <person name="Nakamura Y."/>
            <person name="Ohara O."/>
            <person name="Isogai T."/>
            <person name="Sugano S."/>
        </authorList>
    </citation>
    <scope>NUCLEOTIDE SEQUENCE [LARGE SCALE MRNA] (ISOFORMS 1 AND 2)</scope>
    <scope>VARIANT PHE-412</scope>
    <source>
        <tissue>Testis</tissue>
        <tissue>Thymus</tissue>
    </source>
</reference>
<reference key="6">
    <citation type="journal article" date="2005" name="Nature">
        <title>Generation and annotation of the DNA sequences of human chromosomes 2 and 4.</title>
        <authorList>
            <person name="Hillier L.W."/>
            <person name="Graves T.A."/>
            <person name="Fulton R.S."/>
            <person name="Fulton L.A."/>
            <person name="Pepin K.H."/>
            <person name="Minx P."/>
            <person name="Wagner-McPherson C."/>
            <person name="Layman D."/>
            <person name="Wylie K."/>
            <person name="Sekhon M."/>
            <person name="Becker M.C."/>
            <person name="Fewell G.A."/>
            <person name="Delehaunty K.D."/>
            <person name="Miner T.L."/>
            <person name="Nash W.E."/>
            <person name="Kremitzki C."/>
            <person name="Oddy L."/>
            <person name="Du H."/>
            <person name="Sun H."/>
            <person name="Bradshaw-Cordum H."/>
            <person name="Ali J."/>
            <person name="Carter J."/>
            <person name="Cordes M."/>
            <person name="Harris A."/>
            <person name="Isak A."/>
            <person name="van Brunt A."/>
            <person name="Nguyen C."/>
            <person name="Du F."/>
            <person name="Courtney L."/>
            <person name="Kalicki J."/>
            <person name="Ozersky P."/>
            <person name="Abbott S."/>
            <person name="Armstrong J."/>
            <person name="Belter E.A."/>
            <person name="Caruso L."/>
            <person name="Cedroni M."/>
            <person name="Cotton M."/>
            <person name="Davidson T."/>
            <person name="Desai A."/>
            <person name="Elliott G."/>
            <person name="Erb T."/>
            <person name="Fronick C."/>
            <person name="Gaige T."/>
            <person name="Haakenson W."/>
            <person name="Haglund K."/>
            <person name="Holmes A."/>
            <person name="Harkins R."/>
            <person name="Kim K."/>
            <person name="Kruchowski S.S."/>
            <person name="Strong C.M."/>
            <person name="Grewal N."/>
            <person name="Goyea E."/>
            <person name="Hou S."/>
            <person name="Levy A."/>
            <person name="Martinka S."/>
            <person name="Mead K."/>
            <person name="McLellan M.D."/>
            <person name="Meyer R."/>
            <person name="Randall-Maher J."/>
            <person name="Tomlinson C."/>
            <person name="Dauphin-Kohlberg S."/>
            <person name="Kozlowicz-Reilly A."/>
            <person name="Shah N."/>
            <person name="Swearengen-Shahid S."/>
            <person name="Snider J."/>
            <person name="Strong J.T."/>
            <person name="Thompson J."/>
            <person name="Yoakum M."/>
            <person name="Leonard S."/>
            <person name="Pearman C."/>
            <person name="Trani L."/>
            <person name="Radionenko M."/>
            <person name="Waligorski J.E."/>
            <person name="Wang C."/>
            <person name="Rock S.M."/>
            <person name="Tin-Wollam A.-M."/>
            <person name="Maupin R."/>
            <person name="Latreille P."/>
            <person name="Wendl M.C."/>
            <person name="Yang S.-P."/>
            <person name="Pohl C."/>
            <person name="Wallis J.W."/>
            <person name="Spieth J."/>
            <person name="Bieri T.A."/>
            <person name="Berkowicz N."/>
            <person name="Nelson J.O."/>
            <person name="Osborne J."/>
            <person name="Ding L."/>
            <person name="Meyer R."/>
            <person name="Sabo A."/>
            <person name="Shotland Y."/>
            <person name="Sinha P."/>
            <person name="Wohldmann P.E."/>
            <person name="Cook L.L."/>
            <person name="Hickenbotham M.T."/>
            <person name="Eldred J."/>
            <person name="Williams D."/>
            <person name="Jones T.A."/>
            <person name="She X."/>
            <person name="Ciccarelli F.D."/>
            <person name="Izaurralde E."/>
            <person name="Taylor J."/>
            <person name="Schmutz J."/>
            <person name="Myers R.M."/>
            <person name="Cox D.R."/>
            <person name="Huang X."/>
            <person name="McPherson J.D."/>
            <person name="Mardis E.R."/>
            <person name="Clifton S.W."/>
            <person name="Warren W.C."/>
            <person name="Chinwalla A.T."/>
            <person name="Eddy S.R."/>
            <person name="Marra M.A."/>
            <person name="Ovcharenko I."/>
            <person name="Furey T.S."/>
            <person name="Miller W."/>
            <person name="Eichler E.E."/>
            <person name="Bork P."/>
            <person name="Suyama M."/>
            <person name="Torrents D."/>
            <person name="Waterston R.H."/>
            <person name="Wilson R.K."/>
        </authorList>
    </citation>
    <scope>NUCLEOTIDE SEQUENCE [LARGE SCALE GENOMIC DNA]</scope>
</reference>
<reference key="7">
    <citation type="submission" date="2005-09" db="EMBL/GenBank/DDBJ databases">
        <authorList>
            <person name="Mural R.J."/>
            <person name="Istrail S."/>
            <person name="Sutton G.G."/>
            <person name="Florea L."/>
            <person name="Halpern A.L."/>
            <person name="Mobarry C.M."/>
            <person name="Lippert R."/>
            <person name="Walenz B."/>
            <person name="Shatkay H."/>
            <person name="Dew I."/>
            <person name="Miller J.R."/>
            <person name="Flanigan M.J."/>
            <person name="Edwards N.J."/>
            <person name="Bolanos R."/>
            <person name="Fasulo D."/>
            <person name="Halldorsson B.V."/>
            <person name="Hannenhalli S."/>
            <person name="Turner R."/>
            <person name="Yooseph S."/>
            <person name="Lu F."/>
            <person name="Nusskern D.R."/>
            <person name="Shue B.C."/>
            <person name="Zheng X.H."/>
            <person name="Zhong F."/>
            <person name="Delcher A.L."/>
            <person name="Huson D.H."/>
            <person name="Kravitz S.A."/>
            <person name="Mouchard L."/>
            <person name="Reinert K."/>
            <person name="Remington K.A."/>
            <person name="Clark A.G."/>
            <person name="Waterman M.S."/>
            <person name="Eichler E.E."/>
            <person name="Adams M.D."/>
            <person name="Hunkapiller M.W."/>
            <person name="Myers E.W."/>
            <person name="Venter J.C."/>
        </authorList>
    </citation>
    <scope>NUCLEOTIDE SEQUENCE [LARGE SCALE GENOMIC DNA]</scope>
</reference>
<reference key="8">
    <citation type="journal article" date="2004" name="Genome Res.">
        <title>The status, quality, and expansion of the NIH full-length cDNA project: the Mammalian Gene Collection (MGC).</title>
        <authorList>
            <consortium name="The MGC Project Team"/>
        </authorList>
    </citation>
    <scope>NUCLEOTIDE SEQUENCE [LARGE SCALE MRNA] (ISOFORM 1)</scope>
    <source>
        <tissue>Placenta</tissue>
    </source>
</reference>
<reference key="9">
    <citation type="journal article" date="2004" name="Protein Sci.">
        <title>Signal peptide prediction based on analysis of experimentally verified cleavage sites.</title>
        <authorList>
            <person name="Zhang Z."/>
            <person name="Henzel W.J."/>
        </authorList>
    </citation>
    <scope>PROTEIN SEQUENCE OF 24-38</scope>
</reference>
<reference key="10">
    <citation type="journal article" date="2002" name="J. Immunol.">
        <title>A novel Toll/IL-1 receptor domain-containing adapter that preferentially activates the IFN-beta promoter in the Toll-like receptor signaling.</title>
        <authorList>
            <person name="Yamamoto M."/>
            <person name="Sato S."/>
            <person name="Mori K."/>
            <person name="Hoshino K."/>
            <person name="Takeuchi O."/>
            <person name="Takeda K."/>
            <person name="Akira S."/>
        </authorList>
    </citation>
    <scope>FUNCTION</scope>
    <scope>INTERACTION WITH TICAM1</scope>
</reference>
<reference key="11">
    <citation type="journal article" date="2003" name="Nat. Immunol.">
        <title>TICAM-1, an adapter molecule that participates in Toll-like receptor 3 mediated interferon-beta induction.</title>
        <authorList>
            <person name="Oshiumi H."/>
            <person name="Matsumoto M."/>
            <person name="Funami K."/>
            <person name="Akazawa T."/>
            <person name="Seya T."/>
        </authorList>
    </citation>
    <scope>FUNCTION</scope>
    <scope>INTERACTION WITH TICAM1</scope>
    <source>
        <tissue>Lung</tissue>
    </source>
</reference>
<reference key="12">
    <citation type="journal article" date="2005" name="J. Biol. Chem.">
        <title>Recognition of double-stranded RNA by human toll-like receptor 3 and downstream receptor signaling requires multimerization and an acidic pH.</title>
        <authorList>
            <person name="de Bouteiller O."/>
            <person name="Merck E."/>
            <person name="Hasan U.A."/>
            <person name="Hubac S."/>
            <person name="Benguigui B."/>
            <person name="Trinchieri G."/>
            <person name="Bates E.E."/>
            <person name="Caux C."/>
        </authorList>
    </citation>
    <scope>FUNCTION</scope>
    <scope>SUBUNIT</scope>
    <scope>MUTAGENESIS OF CYS-95; CYS-122; ASN-196 AND ASN-247</scope>
</reference>
<reference key="13">
    <citation type="journal article" date="2006" name="EMBO J.">
        <title>Toll-like receptor 3 associates with c-Src tyrosine kinase on endosomes to initiate antiviral signaling.</title>
        <authorList>
            <person name="Johnsen I.B."/>
            <person name="Nguyen T.T."/>
            <person name="Ringdal M."/>
            <person name="Tryggestad A.M."/>
            <person name="Bakke O."/>
            <person name="Lien E."/>
            <person name="Espevik T."/>
            <person name="Anthonsen M.W."/>
        </authorList>
    </citation>
    <scope>FUNCTION</scope>
    <scope>SUBCELLULAR LOCATION</scope>
    <scope>INTERACTION WITH SRC</scope>
</reference>
<reference key="14">
    <citation type="journal article" date="2006" name="Proc. Natl. Acad. Sci. U.S.A.">
        <title>The dsRNA binding site of human Toll-like receptor 3.</title>
        <authorList>
            <person name="Bell J.K."/>
            <person name="Askins J."/>
            <person name="Hall P.R."/>
            <person name="Davies D.R."/>
            <person name="Segal D.M."/>
        </authorList>
    </citation>
    <scope>FUNCTION</scope>
    <scope>MUTAGENESIS OF HIS-539 AND ASN-541</scope>
</reference>
<reference key="15">
    <citation type="journal article" date="2007" name="J. Biol. Chem.">
        <title>Two tyrosine residues of Toll-like receptor 3 trigger different steps of NF-kappa B activation.</title>
        <authorList>
            <person name="Sarkar S.N."/>
            <person name="Elco C.P."/>
            <person name="Peters K.L."/>
            <person name="Chattopadhyay S."/>
            <person name="Sen G.C."/>
        </authorList>
    </citation>
    <scope>PHOSPHORYLATION AT TYR-759 AND TYR-858</scope>
    <scope>FUNCTION</scope>
    <scope>MUTAGENESIS OF TYR-759</scope>
</reference>
<reference key="16">
    <citation type="journal article" date="2008" name="Proc. Natl. Acad. Sci. U.S.A.">
        <title>The TLR3 signaling complex forms by cooperative receptor dimerization.</title>
        <authorList>
            <person name="Leonard J.N."/>
            <person name="Ghirlando R."/>
            <person name="Askins J."/>
            <person name="Bell J.K."/>
            <person name="Margulies D.H."/>
            <person name="Davies D.R."/>
            <person name="Segal D.M."/>
        </authorList>
    </citation>
    <scope>FUNCTION</scope>
    <scope>DOUBLE-STRANDED RNA-BINDING</scope>
    <scope>HOMODIMERIZATION</scope>
</reference>
<reference key="17">
    <citation type="journal article" date="2009" name="J. Proteome Res.">
        <title>Glycoproteomics analysis of human liver tissue by combination of multiple enzyme digestion and hydrazide chemistry.</title>
        <authorList>
            <person name="Chen R."/>
            <person name="Jiang X."/>
            <person name="Sun D."/>
            <person name="Han G."/>
            <person name="Wang F."/>
            <person name="Ye M."/>
            <person name="Wang L."/>
            <person name="Zou H."/>
        </authorList>
    </citation>
    <scope>GLYCOSYLATION [LARGE SCALE ANALYSIS] AT ASN-52 AND ASN-57</scope>
    <source>
        <tissue>Liver</tissue>
    </source>
</reference>
<reference key="18">
    <citation type="journal article" date="2012" name="Proc. Natl. Acad. Sci. U.S.A.">
        <title>Cleavage of Toll-like receptor 3 by cathepsins B and H is essential for signaling.</title>
        <authorList>
            <person name="Garcia-Cattaneo A."/>
            <person name="Gobert F.X."/>
            <person name="Muller M."/>
            <person name="Toscano F."/>
            <person name="Flores M."/>
            <person name="Lescure A."/>
            <person name="Del Nery E."/>
            <person name="Benaroch P."/>
        </authorList>
    </citation>
    <scope>FUNCTION</scope>
    <scope>PROTEOLYTIC PROCESSING</scope>
    <scope>SUBCELLULAR LOCATION</scope>
    <scope>INTERACTION WITH UNC93B1</scope>
</reference>
<reference key="19">
    <citation type="journal article" date="2015" name="EMBO Rep.">
        <title>WDFY1 mediates TLR3/4 signaling by recruiting TRIF.</title>
        <authorList>
            <person name="Hu Y.H."/>
            <person name="Zhang Y."/>
            <person name="Jiang L.Q."/>
            <person name="Wang S."/>
            <person name="Lei C.Q."/>
            <person name="Sun M.S."/>
            <person name="Shu H.B."/>
            <person name="Liu Y."/>
        </authorList>
    </citation>
    <scope>INTERACTION WITH WDFY1 AND TICAM1</scope>
    <scope>SUBCELLULAR LOCATION</scope>
    <scope>MUTAGENESIS OF TYR-759 AND TYR-858</scope>
</reference>
<reference key="20">
    <citation type="journal article" date="2020" name="Proc. Natl. Acad. Sci. U.S.A.">
        <title>Ubiquitination of TLR3 by TRIM3 signals its ESCRT-mediated trafficking to the endolysosomes for innate antiviral response.</title>
        <authorList>
            <person name="Li W.W."/>
            <person name="Nie Y."/>
            <person name="Yang Y."/>
            <person name="Ran Y."/>
            <person name="Luo W.W."/>
            <person name="Xiong M.G."/>
            <person name="Wang S.Y."/>
            <person name="Xu Z.S."/>
            <person name="Wang Y.Y."/>
        </authorList>
    </citation>
    <scope>UBIQUITINATION AT LYS-831 BY TRIM3</scope>
    <scope>MUTAGENESIS OF LYS-831</scope>
</reference>
<reference key="21">
    <citation type="journal article" date="2020" name="Cell. Mol. Immunol.">
        <title>E3 ubiquitin ligase RNF170 inhibits innate immune responses by targeting and degrading TLR3 in murine cells.</title>
        <authorList>
            <person name="Song X."/>
            <person name="Liu S."/>
            <person name="Wang W."/>
            <person name="Ma Z."/>
            <person name="Cao X."/>
            <person name="Jiang M."/>
        </authorList>
    </citation>
    <scope>FUNCTION</scope>
    <scope>UBIQUITINATION BY RNF170</scope>
</reference>
<reference key="22">
    <citation type="journal article" date="2023" name="J. Exp. Med.">
        <title>The Src-ZNRF1 axis controls TLR3 trafficking and interferon responses to limit lung barrier damage.</title>
        <authorList>
            <person name="Lin Y.S."/>
            <person name="Chang Y.C."/>
            <person name="Chao T.L."/>
            <person name="Tsai Y.M."/>
            <person name="Jhuang S.J."/>
            <person name="Ho Y.H."/>
            <person name="Lai T.Y."/>
            <person name="Liu Y.L."/>
            <person name="Chen C.Y."/>
            <person name="Tsai C.Y."/>
            <person name="Hsueh Y.P."/>
            <person name="Chang S.Y."/>
            <person name="Chuang T.H."/>
            <person name="Lee C.Y."/>
            <person name="Hsu L.C."/>
        </authorList>
    </citation>
    <scope>UBIQUITINATION AT LYS-812</scope>
    <scope>MUTAGENESIS OF LYS-812</scope>
</reference>
<reference key="23">
    <citation type="journal article" date="2005" name="Proc. Natl. Acad. Sci. U.S.A.">
        <title>The molecular structure of the Toll-like receptor 3 ligand-binding domain.</title>
        <authorList>
            <person name="Bell J.K."/>
            <person name="Botos I."/>
            <person name="Hall P.R."/>
            <person name="Askins J."/>
            <person name="Shiloach J."/>
            <person name="Segal D.M."/>
            <person name="Davies D.R."/>
        </authorList>
    </citation>
    <scope>X-RAY CRYSTALLOGRAPHY (2.4 ANGSTROMS) OF 22-703</scope>
    <scope>FUNCTION</scope>
    <scope>DISULFIDE BONDS</scope>
    <scope>SUBUNIT</scope>
    <scope>GLYCOSYLATION AT ASN-52; ASN-70; ASN-196; ASN-252; ASN-265; ASN-275; ASN-291; ASN-398; ASN-413; ASN-507 AND ASN-636</scope>
    <scope>IDENTIFICATION BY MASS SPECTROMETRY</scope>
</reference>
<reference key="24">
    <citation type="journal article" date="2005" name="Science">
        <title>Crystal structure of human toll-like receptor 3 (TLR3) ectodomain.</title>
        <authorList>
            <person name="Choe J."/>
            <person name="Kelker M.S."/>
            <person name="Wilson I.A."/>
        </authorList>
    </citation>
    <scope>X-RAY CRYSTALLOGRAPHY (2.1 ANGSTROMS) OF 27-700</scope>
    <scope>DISULFIDE BONDS</scope>
    <scope>GLYCOSYLATION AT ASN-124; ASN-252; ASN-275; ASN-291; ASN-398; ASN-413 AND ASN-507</scope>
</reference>
<reference key="25">
    <citation type="journal article" date="2012" name="J. Mol. Biol.">
        <title>Lateral clustering of TLR3:dsRNA signaling units revealed by TLR3ecd:3Fabs quaternary structure.</title>
        <authorList>
            <person name="Luo J."/>
            <person name="Obmolova G."/>
            <person name="Malia T.J."/>
            <person name="Wu S.J."/>
            <person name="Duffy K.E."/>
            <person name="Marion J.D."/>
            <person name="Bell J.K."/>
            <person name="Ge P."/>
            <person name="Zhou Z.H."/>
            <person name="Teplyakov A."/>
            <person name="Zhao Y."/>
            <person name="Lamb R.J."/>
            <person name="Jordan J.L."/>
            <person name="San Mateo L.R."/>
            <person name="Sweet R.W."/>
            <person name="Gilliland G.L."/>
        </authorList>
    </citation>
    <scope>X-RAY CRYSTALLOGRAPHY (3.52 ANGSTROMS) OF 22-702 IN COMPLEX WITH ANTIBODY</scope>
    <scope>DISULFIDE BONDS</scope>
    <scope>SUBUNIT</scope>
    <scope>DS-RNA BINDING REGIONS</scope>
    <scope>GLYCOSYLATION AT ASN-52; ASN-70; ASN-124; ASN-247; ASN-252; ASN-265; ASN-275; ASN-291; ASN-398; ASN-413 AND ASN-507</scope>
</reference>
<reference evidence="31" key="26">
    <citation type="journal article" date="2021" name="Nat. Struct. Mol. Biol.">
        <title>Cryo-EM structures of Toll-like receptors in complex with UNC93B1.</title>
        <authorList>
            <person name="Ishida H."/>
            <person name="Asami J."/>
            <person name="Zhang Z."/>
            <person name="Nishizawa T."/>
            <person name="Shigematsu H."/>
            <person name="Ohto U."/>
            <person name="Shimizu T."/>
        </authorList>
    </citation>
    <scope>STRUCTURE BY ELECTRON MICROSCOPY (3.40 ANGSTROMS) IN COMPLEX WITH UNC93B1</scope>
    <scope>INTERACTION WITH UNC93B1</scope>
</reference>
<reference key="27">
    <citation type="journal article" date="2007" name="Science">
        <title>TLR3 deficiency in patients with herpes simplex encephalitis.</title>
        <authorList>
            <person name="Zhang S.-Y."/>
            <person name="Jouanguy E."/>
            <person name="Ugolini S."/>
            <person name="Smahi A."/>
            <person name="Elain G."/>
            <person name="Romero P."/>
            <person name="Segal D."/>
            <person name="Sancho-Shimizu V."/>
            <person name="Lorenzo L."/>
            <person name="Puel A."/>
            <person name="Picard C."/>
            <person name="Chapgier A."/>
            <person name="Plancoulaine S."/>
            <person name="Titeux M."/>
            <person name="Cognet C."/>
            <person name="von Bernuth H."/>
            <person name="Ku C.-L."/>
            <person name="Casrouge A."/>
            <person name="Zhang X.-X."/>
            <person name="Barreiro L."/>
            <person name="Leonard J."/>
            <person name="Hamilton C."/>
            <person name="Lebon P."/>
            <person name="Heron B."/>
            <person name="Vallee L."/>
            <person name="Quintana-Murci L."/>
            <person name="Hovnanian A."/>
            <person name="Rozenberg F."/>
            <person name="Vivier E."/>
            <person name="Geissmann F."/>
            <person name="Tardieu M."/>
            <person name="Abel L."/>
            <person name="Casanova J.-L."/>
        </authorList>
    </citation>
    <scope>VARIANT IMD83 SER-554</scope>
</reference>
<reference key="28">
    <citation type="journal article" date="2008" name="N. Engl. J. Med.">
        <title>Toll-like receptor 3 and geographic atrophy in age-related macular degeneration.</title>
        <authorList>
            <person name="Yang Z."/>
            <person name="Stratton C."/>
            <person name="Francis P.J."/>
            <person name="Kleinman M.E."/>
            <person name="Tan P.L."/>
            <person name="Gibbs D."/>
            <person name="Tong Z."/>
            <person name="Chen H."/>
            <person name="Constantine R."/>
            <person name="Yang X."/>
            <person name="Chen Y."/>
            <person name="Zeng J."/>
            <person name="Davey L."/>
            <person name="Ma X."/>
            <person name="Hau V.S."/>
            <person name="Wang C."/>
            <person name="Harmon J."/>
            <person name="Buehler J."/>
            <person name="Pearson E."/>
            <person name="Patel S."/>
            <person name="Kaminoh Y."/>
            <person name="Watkins S."/>
            <person name="Luo L."/>
            <person name="Zabriskie N.A."/>
            <person name="Bernstein P.S."/>
            <person name="Cho W."/>
            <person name="Schwager A."/>
            <person name="Hinton D.R."/>
            <person name="Klein M.L."/>
            <person name="Hamon S.C."/>
            <person name="Simmons E."/>
            <person name="Yu B."/>
            <person name="Campochiaro B."/>
            <person name="Sunness J.S."/>
            <person name="Campochiaro P."/>
            <person name="Jorde L."/>
            <person name="Parmigiani G."/>
            <person name="Zack D.J."/>
            <person name="Katsanis N."/>
            <person name="Ambati J."/>
            <person name="Zhang K."/>
        </authorList>
    </citation>
    <scope>VARIANT PHE-412</scope>
</reference>
<reference key="29">
    <citation type="journal article" date="2008" name="N. Engl. J. Med.">
        <authorList>
            <person name="Yang Z."/>
            <person name="Stratton C."/>
            <person name="Francis P.J."/>
            <person name="Kleinman M.E."/>
            <person name="Tan P.L."/>
            <person name="Gibbs D."/>
            <person name="Tong Z."/>
            <person name="Chen H."/>
            <person name="Constantine R."/>
            <person name="Yang X."/>
            <person name="Chen Y."/>
            <person name="Zeng J."/>
            <person name="Davey L."/>
            <person name="Ma X."/>
            <person name="Hau V.S."/>
            <person name="Wang C."/>
            <person name="Harmon J."/>
            <person name="Buehler J."/>
            <person name="Pearson E."/>
            <person name="Patel S."/>
            <person name="Kaminoh Y."/>
            <person name="Watkins S."/>
            <person name="Luo L."/>
            <person name="Zabriskie N.A."/>
            <person name="Bernstein P.S."/>
            <person name="Cho W."/>
            <person name="Schwager A."/>
            <person name="Hinton D.R."/>
            <person name="Klein M.L."/>
            <person name="Hamon S.C."/>
            <person name="Simmons E."/>
            <person name="Yu B."/>
            <person name="Campochiaro B."/>
            <person name="Sunness J.S."/>
            <person name="Campochiaro P."/>
            <person name="Jorde L."/>
            <person name="Parmigiani G."/>
            <person name="Zack D.J."/>
            <person name="Katsanis N."/>
            <person name="Ambati J."/>
            <person name="Zhang K."/>
        </authorList>
    </citation>
    <scope>ERRATUM OF PUBMED:18753640</scope>
</reference>
<reference key="30">
    <citation type="journal article" date="2012" name="J. Immunol.">
        <title>A common polymorphism in TLR3 confers natural resistance to HIV-1 infection.</title>
        <authorList>
            <person name="Sironi M."/>
            <person name="Biasin M."/>
            <person name="Cagliani R."/>
            <person name="Forni D."/>
            <person name="De Luca M."/>
            <person name="Saulle I."/>
            <person name="Lo Caputo S."/>
            <person name="Mazzotta F."/>
            <person name="Macias J."/>
            <person name="Pineda J.A."/>
            <person name="Caruz A."/>
            <person name="Clerici M."/>
        </authorList>
    </citation>
    <scope>VARIANT PHE-412</scope>
</reference>
<reference key="31">
    <citation type="journal article" date="2020" name="Science">
        <title>Inborn errors of type I IFN immunity in patients with life-threatening COVID-19.</title>
        <authorList>
            <consortium name="COVID-STORM Clinicians"/>
            <consortium name="COVID Clinicians"/>
            <consortium name="Imagine COVID Group"/>
            <consortium name="French COVID Cohort Study Group"/>
            <consortium name="CoV-Contact Cohort"/>
            <consortium name="Amsterdam UMC Covid-19 Biobank"/>
            <consortium name="COVID Human Genetic Effort"/>
            <consortium name="NIAID-USUHS/TAGC COVID Immunity Group"/>
            <person name="Zhang Q."/>
            <person name="Bastard P."/>
            <person name="Liu Z."/>
            <person name="Le Pen J."/>
            <person name="Moncada-Velez M."/>
            <person name="Chen J."/>
            <person name="Ogishi M."/>
            <person name="Sabli I.K.D."/>
            <person name="Hodeib S."/>
            <person name="Korol C."/>
            <person name="Rosain J."/>
            <person name="Bilguvar K."/>
            <person name="Ye J."/>
            <person name="Bolze A."/>
            <person name="Bigio B."/>
            <person name="Yang R."/>
            <person name="Arias A.A."/>
            <person name="Zhou Q."/>
            <person name="Zhang Y."/>
            <person name="Onodi F."/>
            <person name="Korniotis S."/>
            <person name="Karpf L."/>
            <person name="Philippot Q."/>
            <person name="Chbihi M."/>
            <person name="Bonnet-Madin L."/>
            <person name="Dorgham K."/>
            <person name="Smith N."/>
            <person name="Schneider W.M."/>
            <person name="Razooky B.S."/>
            <person name="Hoffmann H.H."/>
            <person name="Michailidis E."/>
            <person name="Moens L."/>
            <person name="Han J.E."/>
            <person name="Lorenzo L."/>
            <person name="Bizien L."/>
            <person name="Meade P."/>
            <person name="Neehus A.L."/>
            <person name="Ugurbil A.C."/>
            <person name="Corneau A."/>
            <person name="Kerner G."/>
            <person name="Zhang P."/>
            <person name="Rapaport F."/>
            <person name="Seeleuthner Y."/>
            <person name="Manry J."/>
            <person name="Masson C."/>
            <person name="Schmitt Y."/>
            <person name="Schlueter A."/>
            <person name="Le Voyer T."/>
            <person name="Khan T."/>
            <person name="Li J."/>
            <person name="Fellay J."/>
            <person name="Roussel L."/>
            <person name="Shahrooei M."/>
            <person name="Alosaimi M.F."/>
            <person name="Mansouri D."/>
            <person name="Al-Saud H."/>
            <person name="Al-Mulla F."/>
            <person name="Almourfi F."/>
            <person name="Al-Muhsen S.Z."/>
            <person name="Alsohime F."/>
            <person name="Al Turki S."/>
            <person name="Hasanato R."/>
            <person name="van de Beek D."/>
            <person name="Biondi A."/>
            <person name="Bettini L.R."/>
            <person name="D'Angio' M."/>
            <person name="Bonfanti P."/>
            <person name="Imberti L."/>
            <person name="Sottini A."/>
            <person name="Paghera S."/>
            <person name="Quiros-Roldan E."/>
            <person name="Rossi C."/>
            <person name="Oler A.J."/>
            <person name="Tompkins M.F."/>
            <person name="Alba C."/>
            <person name="Vandernoot I."/>
            <person name="Goffard J.C."/>
            <person name="Smits G."/>
            <person name="Migeotte I."/>
            <person name="Haerynck F."/>
            <person name="Soler-Palacin P."/>
            <person name="Martin-Nalda A."/>
            <person name="Colobran R."/>
            <person name="Morange P.E."/>
            <person name="Keles S."/>
            <person name="Coelkesen F."/>
            <person name="Ozcelik T."/>
            <person name="Yasar K.K."/>
            <person name="Senoglu S."/>
            <person name="Karabela S.N."/>
            <person name="Rodriguez-Gallego C."/>
            <person name="Novelli G."/>
            <person name="Hraiech S."/>
            <person name="Tandjaoui-Lambiotte Y."/>
            <person name="Duval X."/>
            <person name="Laouenan C."/>
            <person name="Snow A.L."/>
            <person name="Dalgard C.L."/>
            <person name="Milner J.D."/>
            <person name="Vinh D.C."/>
            <person name="Mogensen T.H."/>
            <person name="Marr N."/>
            <person name="Spaan A.N."/>
            <person name="Boisson B."/>
            <person name="Boisson-Dupuis S."/>
            <person name="Bustamante J."/>
            <person name="Puel A."/>
            <person name="Ciancanelli M.J."/>
            <person name="Meyts I."/>
            <person name="Maniatis T."/>
            <person name="Soumelis V."/>
            <person name="Amara A."/>
            <person name="Nussenzweig M."/>
            <person name="Garcia-Sastre A."/>
            <person name="Krammer F."/>
            <person name="Pujol A."/>
            <person name="Duffy D."/>
            <person name="Lifton R.P."/>
            <person name="Zhang S.Y."/>
            <person name="Gorochov G."/>
            <person name="Beziat V."/>
            <person name="Jouanguy E."/>
            <person name="Sancho-Shimizu V."/>
            <person name="Rice C.M."/>
            <person name="Abel L."/>
            <person name="Notarangelo L.D."/>
            <person name="Cobat A."/>
            <person name="Su H.C."/>
            <person name="Casanova J.L."/>
        </authorList>
    </citation>
    <scope>VARIANTS PRO-134; GLY-251; SER-554; LEU-732; 746-GLU--HIS-904 DEL; 769-TRP--HIS-904 DEL; GLN-867 AND VAL-870</scope>
    <scope>CHARACTERIZATION OF VARIANTS PRO-134; GLY-251; SER-554; LEU-732; 746-GLU--HIS-904 DEL; 769-TRP--HIS-904 DEL; GLN-867 AND VAL-870</scope>
</reference>
<proteinExistence type="evidence at protein level"/>
<keyword id="KW-0002">3D-structure</keyword>
<keyword id="KW-0025">Alternative splicing</keyword>
<keyword id="KW-0903">Direct protein sequencing</keyword>
<keyword id="KW-0225">Disease variant</keyword>
<keyword id="KW-1015">Disulfide bond</keyword>
<keyword id="KW-0256">Endoplasmic reticulum</keyword>
<keyword id="KW-0967">Endosome</keyword>
<keyword id="KW-0325">Glycoprotein</keyword>
<keyword id="KW-0391">Immunity</keyword>
<keyword id="KW-0395">Inflammatory response</keyword>
<keyword id="KW-0399">Innate immunity</keyword>
<keyword id="KW-1017">Isopeptide bond</keyword>
<keyword id="KW-0433">Leucine-rich repeat</keyword>
<keyword id="KW-0472">Membrane</keyword>
<keyword id="KW-0597">Phosphoprotein</keyword>
<keyword id="KW-1267">Proteomics identification</keyword>
<keyword id="KW-0675">Receptor</keyword>
<keyword id="KW-1185">Reference proteome</keyword>
<keyword id="KW-0677">Repeat</keyword>
<keyword id="KW-0694">RNA-binding</keyword>
<keyword id="KW-0732">Signal</keyword>
<keyword id="KW-0812">Transmembrane</keyword>
<keyword id="KW-1133">Transmembrane helix</keyword>
<keyword id="KW-0832">Ubl conjugation</keyword>
<comment type="function">
    <text evidence="3 4 8 9 10 11 13 15 20">Key component of innate and adaptive immunity. TLRs (Toll-like receptors) control host immune response against pathogens through recognition of molecular patterns specific to microorganisms. TLR3 is a nucleotide-sensing TLR which is activated by double-stranded RNA, a sign of viral infection. Acts via the adapter TRIF/TICAM1, leading to NF-kappa-B activation, IRF3 nuclear translocation, cytokine secretion and the inflammatory response.</text>
</comment>
<comment type="subunit">
    <text evidence="3 4 8 9 11 19 20 21 22 25">Monomer and homodimer; dimerization is triggered by ligand-binding, the signaling unit is composed of one ds-RNA of around 40 bp and two TLR3 molecules, and lateral clustering of signaling units along the length of the ds-RNA ligand is required for TLR3 signal transduction. Interacts (via transmembrane domain) with UNC93B1; the interaction is required for transport from the ER to the endosomes (PubMed:33432245). Interacts with SRC; upon binding of double-stranded RNA. Interacts with TICAM1 (via the TIR domain) in response to poly(I:C) and this interaction is enhanced in the presence of WDFY1 (PubMed:25736436). The tyrosine-phosphorylated form (via TIR domain) interacts with WDFY1 (via WD repeat 2) in response to poly(I:C) (PubMed:25736436).</text>
</comment>
<comment type="interaction">
    <interactant intactId="EBI-6116630">
        <id>O15455</id>
    </interactant>
    <interactant intactId="EBI-79464">
        <id>P27986</id>
        <label>PIK3R1</label>
    </interactant>
    <organismsDiffer>false</organismsDiffer>
    <experiments>2</experiments>
</comment>
<comment type="interaction">
    <interactant intactId="EBI-6116630">
        <id>O15455</id>
    </interactant>
    <interactant intactId="EBI-6116630">
        <id>O15455</id>
        <label>TLR3</label>
    </interactant>
    <organismsDiffer>false</organismsDiffer>
    <experiments>5</experiments>
</comment>
<comment type="subcellular location">
    <subcellularLocation>
        <location>Endoplasmic reticulum membrane</location>
        <topology>Single-pass type I membrane protein</topology>
    </subcellularLocation>
    <subcellularLocation>
        <location>Endosome membrane</location>
    </subcellularLocation>
    <subcellularLocation>
        <location evidence="21">Early endosome</location>
    </subcellularLocation>
</comment>
<comment type="alternative products">
    <event type="alternative splicing"/>
    <isoform>
        <id>O15455-1</id>
        <name>1</name>
        <sequence type="displayed"/>
    </isoform>
    <isoform>
        <id>O15455-2</id>
        <name>2</name>
        <sequence type="described" ref="VSP_054188"/>
    </isoform>
</comment>
<comment type="tissue specificity">
    <text evidence="12">Expressed at high level in placenta and pancreas. Also detected in CD11c+ immature dendritic cells. Only expressed in dendritic cells and not in other leukocytes, including monocyte precursors. TLR3 is the TLR that is expressed most strongly in the brain, especially in astrocytes, glia, and neurons.</text>
</comment>
<comment type="domain">
    <text>ds-RNA binding is mediated by LRR 1 to 3, and LRR 17 to 18.</text>
</comment>
<comment type="PTM">
    <text evidence="7 8 17 19">Heavily N-glycosylated, except on that part of the surface of the ectodomain that is involved in ligand binding.</text>
</comment>
<comment type="PTM">
    <text evidence="20">TLR3 signaling requires a proteolytic cleavage mediated by cathepsins CTSB and CTSH, the cleavage occurs between amino acids 252 and 346. The cleaved form of TLR3 is the predominant form found in endosomes.</text>
</comment>
<comment type="PTM">
    <text evidence="22 23 26">Ubiquitinated by TRIM3; leading to recognition and sorting of polyubiquitinated TLR3 by the ESCRT complexes (PubMed:32878999). Ubiquitinated by ZNRF1 via 'Lys-63'-linked ubiquitin chains; leading to TLR3 lysosomal trafficking and degradation (PubMed:37158982). Ubiquitinated by RNF170 at Lys-765 via 'Lys-48'-linked ubiquitin chains; leading to TLR3 proteasomal degradation (PubMed:31076723).</text>
</comment>
<comment type="polymorphism">
    <text>The Phe-412 allele (dbSNP:rs3775291) occurs with a frequency of 30% in populations with European and Asian ancestry, and confers some natural resistance to HIV-1 infection.</text>
</comment>
<comment type="disease" evidence="14">
    <disease id="DI-02371">
        <name>Immunodeficiency 83, susceptibility to viral infections</name>
        <acronym>IMD83</acronym>
        <description>An immunologic disorder characterized by increased susceptibility to severe viral infections, including herpes simplex virus (HSV), varicella zoster virus (VZV), influenza A virus (IAV), hantavirus, and possibly respiratory syncytial virus (RSV). IMD83 clinical manifestations include acute infection-induced encephalitis and pneumonitis. The susceptibility to encephalitis or pneumonitis appears to result from impaired TLR3-dependent interferon production by nonhematopoietic cells that reside within the central nervous system or lung epithelial cells. IMD83 transmission pattern is consistent with autosomal dominant or autosomal recessive inheritance with incomplete penetrance.</description>
        <dbReference type="MIM" id="613002"/>
    </disease>
    <text>The disease is caused by variants affecting the gene represented in this entry.</text>
</comment>
<comment type="similarity">
    <text evidence="29">Belongs to the Toll-like receptor family.</text>
</comment>
<comment type="online information" name="TLR3base">
    <link uri="https://databases.lovd.nl/shared/genes/TLR3"/>
    <text>TLR3 mutation db</text>
</comment>
<accession>O15455</accession>
<accession>B2RAI7</accession>
<accession>B7Z7K0</accession>
<accession>E6Y0F0</accession>
<accession>E6Y0F1</accession>
<accession>E9PGH4</accession>
<accession>Q4VAL2</accession>
<accession>Q504W0</accession>
<gene>
    <name evidence="30" type="primary">TLR3</name>
</gene>
<sequence length="904" mass="103829">MRQTLPCIYFWGGLLPFGMLCASSTTKCTVSHEVADCSHLKLTQVPDDLPTNITVLNLTHNQLRRLPAANFTRYSQLTSLDVGFNTISKLEPELCQKLPMLKVLNLQHNELSQLSDKTFAFCTNLTELHLMSNSIQKIKNNPFVKQKNLITLDLSHNGLSSTKLGTQVQLENLQELLLSNNKIQALKSEELDIFANSSLKKLELSSNQIKEFSPGCFHAIGRLFGLFLNNVQLGPSLTEKLCLELANTSIRNLSLSNSQLSTTSNTTFLGLKWTNLTMLDLSYNNLNVVGNDSFAWLPQLEYFFLEYNNIQHLFSHSLHGLFNVRYLNLKRSFTKQSISLASLPKIDDFSFQWLKCLEHLNMEDNDIPGIKSNMFTGLINLKYLSLSNSFTSLRTLTNETFVSLAHSPLHILNLTKNKISKIESDAFSWLGHLEVLDLGLNEIGQELTGQEWRGLENIFEIYLSYNKYLQLTRNSFALVPSLQRLMLRRVALKNVDSSPSPFQPLRNLTILDLSNNNIANINDDMLEGLEKLEILDLQHNNLARLWKHANPGGPIYFLKGLSHLHILNLESNGFDEIPVEVFKDLFELKIIDLGLNNLNTLPASVFNNQVSLKSLNLQKNLITSVEKKVFGPAFRNLTELDMRFNPFDCTCESIAWFVNWINETHTNIPELSSHYLCNTPPHYHGFPVRLFDTSSCKDSAPFELFFMINTSILLIFIFIVLLIHFEGWRISFYWNVSVHRVLGFKEIDRQTEQFEYAAYIIHAYKDKDWVWEHFSSMEKEDQSLKFCLEERDFEAGVFELEAIVNSIKRSRKIIFVITHHLLKDPLCKRFKVHHAVQQAIEQNLDSIILVFLEEIPDYKLNHALCLRRGMFKSHCILNWPVQKERIGAFRHKLQVALGSKNSVH</sequence>
<organism>
    <name type="scientific">Homo sapiens</name>
    <name type="common">Human</name>
    <dbReference type="NCBI Taxonomy" id="9606"/>
    <lineage>
        <taxon>Eukaryota</taxon>
        <taxon>Metazoa</taxon>
        <taxon>Chordata</taxon>
        <taxon>Craniata</taxon>
        <taxon>Vertebrata</taxon>
        <taxon>Euteleostomi</taxon>
        <taxon>Mammalia</taxon>
        <taxon>Eutheria</taxon>
        <taxon>Euarchontoglires</taxon>
        <taxon>Primates</taxon>
        <taxon>Haplorrhini</taxon>
        <taxon>Catarrhini</taxon>
        <taxon>Hominidae</taxon>
        <taxon>Homo</taxon>
    </lineage>
</organism>